<proteinExistence type="evidence at protein level"/>
<accession>P23639</accession>
<accession>D6W0J3</accession>
<name>PSA2_YEAST</name>
<keyword id="KW-0002">3D-structure</keyword>
<keyword id="KW-0963">Cytoplasm</keyword>
<keyword id="KW-0903">Direct protein sequencing</keyword>
<keyword id="KW-1017">Isopeptide bond</keyword>
<keyword id="KW-0539">Nucleus</keyword>
<keyword id="KW-0647">Proteasome</keyword>
<keyword id="KW-1185">Reference proteome</keyword>
<keyword id="KW-0832">Ubl conjugation</keyword>
<sequence>MTDRYSFSLTTFSPSGKLGQIDYALTAVKQGVTSLGIKATNGVVIATEKKSSSPLAMSETLSKVSLLTPDIGAVYSGMGPDYRVLVDKSRKVAHTSYKRIYGEYPPTKLLVSEVAKIMQEATQSGGVRPFGVSLLIAGHDEFNGFSLYQVDPSGSYFPWKATAIGKGSVAAKTFLEKRWNDELELEDAIHIALLTLKESVEGEFNGDTIELAIIGDENPDLLGYTGIPTDKGPRFRKLTSQEINDRLEAL</sequence>
<reference key="1">
    <citation type="journal article" date="1991" name="Mol. Cell. Biol.">
        <title>Molecular cloning and functional analysis of three subunits of yeast proteasome.</title>
        <authorList>
            <person name="Emori Y."/>
            <person name="Tsukahara T."/>
            <person name="Kawasaki H."/>
            <person name="Ishiura S."/>
            <person name="Sugita H."/>
            <person name="Suzuki K."/>
        </authorList>
    </citation>
    <scope>NUCLEOTIDE SEQUENCE [GENOMIC DNA]</scope>
    <scope>PARTIAL PROTEIN SEQUENCE</scope>
    <source>
        <strain>ATCC 26786 / X2180-1A</strain>
    </source>
</reference>
<reference key="2">
    <citation type="journal article" date="1997" name="Nature">
        <title>The nucleotide sequence of Saccharomyces cerevisiae chromosome XIII.</title>
        <authorList>
            <person name="Bowman S."/>
            <person name="Churcher C.M."/>
            <person name="Badcock K."/>
            <person name="Brown D."/>
            <person name="Chillingworth T."/>
            <person name="Connor R."/>
            <person name="Dedman K."/>
            <person name="Devlin K."/>
            <person name="Gentles S."/>
            <person name="Hamlin N."/>
            <person name="Hunt S."/>
            <person name="Jagels K."/>
            <person name="Lye G."/>
            <person name="Moule S."/>
            <person name="Odell C."/>
            <person name="Pearson D."/>
            <person name="Rajandream M.A."/>
            <person name="Rice P."/>
            <person name="Skelton J."/>
            <person name="Walsh S.V."/>
            <person name="Whitehead S."/>
            <person name="Barrell B.G."/>
        </authorList>
    </citation>
    <scope>NUCLEOTIDE SEQUENCE [LARGE SCALE GENOMIC DNA]</scope>
    <source>
        <strain>ATCC 204508 / S288c</strain>
    </source>
</reference>
<reference key="3">
    <citation type="journal article" date="2014" name="G3 (Bethesda)">
        <title>The reference genome sequence of Saccharomyces cerevisiae: Then and now.</title>
        <authorList>
            <person name="Engel S.R."/>
            <person name="Dietrich F.S."/>
            <person name="Fisk D.G."/>
            <person name="Binkley G."/>
            <person name="Balakrishnan R."/>
            <person name="Costanzo M.C."/>
            <person name="Dwight S.S."/>
            <person name="Hitz B.C."/>
            <person name="Karra K."/>
            <person name="Nash R.S."/>
            <person name="Weng S."/>
            <person name="Wong E.D."/>
            <person name="Lloyd P."/>
            <person name="Skrzypek M.S."/>
            <person name="Miyasato S.R."/>
            <person name="Simison M."/>
            <person name="Cherry J.M."/>
        </authorList>
    </citation>
    <scope>GENOME REANNOTATION</scope>
    <source>
        <strain>ATCC 204508 / S288c</strain>
    </source>
</reference>
<reference key="4">
    <citation type="journal article" date="2007" name="Genome Res.">
        <title>Approaching a complete repository of sequence-verified protein-encoding clones for Saccharomyces cerevisiae.</title>
        <authorList>
            <person name="Hu Y."/>
            <person name="Rolfs A."/>
            <person name="Bhullar B."/>
            <person name="Murthy T.V.S."/>
            <person name="Zhu C."/>
            <person name="Berger M.F."/>
            <person name="Camargo A.A."/>
            <person name="Kelley F."/>
            <person name="McCarron S."/>
            <person name="Jepson D."/>
            <person name="Richardson A."/>
            <person name="Raphael J."/>
            <person name="Moreira D."/>
            <person name="Taycher E."/>
            <person name="Zuo D."/>
            <person name="Mohr S."/>
            <person name="Kane M.F."/>
            <person name="Williamson J."/>
            <person name="Simpson A.J.G."/>
            <person name="Bulyk M.L."/>
            <person name="Harlow E."/>
            <person name="Marsischky G."/>
            <person name="Kolodner R.D."/>
            <person name="LaBaer J."/>
        </authorList>
    </citation>
    <scope>NUCLEOTIDE SEQUENCE [GENOMIC DNA]</scope>
    <source>
        <strain>ATCC 204508 / S288c</strain>
    </source>
</reference>
<reference key="5">
    <citation type="journal article" date="2003" name="Nature">
        <title>Global analysis of protein expression in yeast.</title>
        <authorList>
            <person name="Ghaemmaghami S."/>
            <person name="Huh W.-K."/>
            <person name="Bower K."/>
            <person name="Howson R.W."/>
            <person name="Belle A."/>
            <person name="Dephoure N."/>
            <person name="O'Shea E.K."/>
            <person name="Weissman J.S."/>
        </authorList>
    </citation>
    <scope>LEVEL OF PROTEIN EXPRESSION [LARGE SCALE ANALYSIS]</scope>
</reference>
<reference key="6">
    <citation type="journal article" date="2008" name="Mol. Cell. Proteomics">
        <title>A multidimensional chromatography technology for in-depth phosphoproteome analysis.</title>
        <authorList>
            <person name="Albuquerque C.P."/>
            <person name="Smolka M.B."/>
            <person name="Payne S.H."/>
            <person name="Bafna V."/>
            <person name="Eng J."/>
            <person name="Zhou H."/>
        </authorList>
    </citation>
    <scope>IDENTIFICATION BY MASS SPECTROMETRY [LARGE SCALE ANALYSIS]</scope>
</reference>
<reference key="7">
    <citation type="journal article" date="2012" name="Proteomics">
        <title>Sites of ubiquitin attachment in Saccharomyces cerevisiae.</title>
        <authorList>
            <person name="Starita L.M."/>
            <person name="Lo R.S."/>
            <person name="Eng J.K."/>
            <person name="von Haller P.D."/>
            <person name="Fields S."/>
        </authorList>
    </citation>
    <scope>UBIQUITINATION [LARGE SCALE ANALYSIS] AT LYS-108</scope>
    <scope>IDENTIFICATION BY MASS SPECTROMETRY [LARGE SCALE ANALYSIS]</scope>
</reference>
<reference key="8">
    <citation type="journal article" date="1997" name="Nature">
        <title>Structure of 20S proteasome from yeast at 2.4-A resolution.</title>
        <authorList>
            <person name="Groll M."/>
            <person name="Ditzel L."/>
            <person name="Loewe J."/>
            <person name="Stock D."/>
            <person name="Bochtler M."/>
            <person name="Bartunik H.D."/>
            <person name="Huber R."/>
        </authorList>
    </citation>
    <scope>X-RAY CRYSTALLOGRAPHY (1.9 ANGSTROMS) OF COMPLEX WITH THE 20S PROTEASOME</scope>
</reference>
<reference key="9">
    <citation type="journal article" date="2000" name="Nature">
        <title>Structural basis for the activation of 20S proteasomes by 11S regulators.</title>
        <authorList>
            <person name="Whitby F.G."/>
            <person name="Masters E.I."/>
            <person name="Kramer L."/>
            <person name="Knowlton J.R."/>
            <person name="Yao Y."/>
            <person name="Wang C.C."/>
            <person name="Hill C.P."/>
        </authorList>
    </citation>
    <scope>X-RAY CRYSTALLOGRAPHY (3.2 ANGSTROMS) OF COMPLEX WITH THE 20S PROTEASOME AND A 11S REGULATORY COMPLEX</scope>
</reference>
<reference key="10">
    <citation type="journal article" date="2000" name="Nat. Struct. Biol.">
        <title>A gated channel into the proteasome core particle.</title>
        <authorList>
            <person name="Groll M."/>
            <person name="Bajorek M."/>
            <person name="Koehler A."/>
            <person name="Moroder L."/>
            <person name="Rubin D.M."/>
            <person name="Huber R."/>
            <person name="Glickman M.H."/>
            <person name="Finley D."/>
        </authorList>
    </citation>
    <scope>X-RAY CRYSTALLOGRAPHY (2.4 ANGSTROMS) OF COMPLEX WITH THE 20S PROTEASOME</scope>
</reference>
<reference key="11">
    <citation type="journal article" date="2006" name="Chem. Biol.">
        <title>TMC-95-based inhibitor design provides evidence for the catalytic versatility of the proteasome.</title>
        <authorList>
            <person name="Groll M."/>
            <person name="Goetz M."/>
            <person name="Kaiser M."/>
            <person name="Weyher E."/>
            <person name="Moroder L."/>
        </authorList>
    </citation>
    <scope>X-RAY CRYSTALLOGRAPHY (2.81 ANGSTROMS) OF COMPLEX WITH THE 20S PROTEASOME AND A TMC-95-BASED INHIBITOR</scope>
</reference>
<reference key="12">
    <citation type="journal article" date="2006" name="J. Am. Chem. Soc.">
        <title>Crystal structures of salinosporamide A (NPI-0052) and B (NPI-0047) in complex with the 20S proteasome reveal important consequences of beta-lactone ring opening and a mechanism for irreversible binding.</title>
        <authorList>
            <person name="Groll M."/>
            <person name="Huber R."/>
            <person name="Potts B.C.M."/>
        </authorList>
    </citation>
    <scope>X-RAY CRYSTALLOGRAPHY (2.8 ANGSTROMS) OF COMPLEX WITH THE 20S PROTEASOME AND SALINOSPORAMIDE</scope>
</reference>
<reference key="13">
    <citation type="journal article" date="2006" name="Structure">
        <title>Crystal structure of the boronic acid-based proteasome inhibitor bortezomib in complex with the yeast 20S proteasome.</title>
        <authorList>
            <person name="Groll M."/>
            <person name="Berkers C.R."/>
            <person name="Ploegh H.L."/>
            <person name="Ovaa H."/>
        </authorList>
    </citation>
    <scope>X-RAY CRYSTALLOGRAPHY (2.8 ANGSTROMS) OF COMPLEX WITH THE 20S PROTEASOME AND BORTEZOMIB</scope>
</reference>
<reference key="14">
    <citation type="journal article" date="2010" name="Mol. Cell">
        <title>Structure of a Blm10 complex reveals common mechanisms for proteasome binding and gate opening.</title>
        <authorList>
            <person name="Sadre-Bazzaz K."/>
            <person name="Whitby F.G."/>
            <person name="Robinson H."/>
            <person name="Formosa T."/>
            <person name="Hill C.P."/>
        </authorList>
    </citation>
    <scope>X-RAY CRYSTALLOGRAPHY (3.0 ANGSTROMS) OF 20-250 IN COMPLEX WITH THE PROTEASOME</scope>
</reference>
<reference key="15">
    <citation type="journal article" date="2012" name="Proc. Natl. Acad. Sci. U.S.A.">
        <title>Near-atomic resolution structural model of the yeast 26S proteasome.</title>
        <authorList>
            <person name="Beck F."/>
            <person name="Unverdorben P."/>
            <person name="Bohn S."/>
            <person name="Schweitzer A."/>
            <person name="Pfeifer G."/>
            <person name="Sakata E."/>
            <person name="Nickell S."/>
            <person name="Plitzko J.M."/>
            <person name="Villa E."/>
            <person name="Baumeister W."/>
            <person name="Forster F."/>
        </authorList>
    </citation>
    <scope>STRUCTURE BY ELECTRON MICROSCOPY (7.4 ANGSTROMS) OF THE 26S PROTEASOME</scope>
</reference>
<comment type="function">
    <text>The proteasome degrades poly-ubiquitinated proteins in the cytoplasm and in the nucleus. It is essential for the regulated turnover of proteins and for the removal of misfolded proteins. The proteasome is a multicatalytic proteinase complex that is characterized by its ability to cleave peptides with Arg, Phe, Tyr, Leu, and Glu adjacent to the leaving group at neutral or slightly basic pH. It has an ATP-dependent proteolytic activity.</text>
</comment>
<comment type="subunit">
    <text evidence="3">The 26S proteasome consists of a 20S proteasome core and two 19S regulatory subunits. The 20S proteasome core is composed of 28 subunits that are arranged in four stacked rings, resulting in a barrel-shaped structure. The two end rings are each formed by seven alpha subunits, and the two central rings are each formed by seven beta subunits. The catalytic chamber with the active sites is on the inside of the barrel.</text>
</comment>
<comment type="interaction">
    <interactant intactId="EBI-13959">
        <id>P23639</id>
    </interactant>
    <interactant intactId="EBI-2343020">
        <id>Q12245</id>
        <label>POC4</label>
    </interactant>
    <organismsDiffer>false</organismsDiffer>
    <experiments>2</experiments>
</comment>
<comment type="interaction">
    <interactant intactId="EBI-13959">
        <id>P23639</id>
    </interactant>
    <interactant intactId="EBI-13963">
        <id>P21242</id>
        <label>PRE10</label>
    </interactant>
    <organismsDiffer>false</organismsDiffer>
    <experiments>3</experiments>
</comment>
<comment type="interaction">
    <interactant intactId="EBI-13959">
        <id>P23639</id>
    </interactant>
    <interactant intactId="EBI-14001">
        <id>P30656</id>
        <label>PRE2</label>
    </interactant>
    <organismsDiffer>false</organismsDiffer>
    <experiments>2</experiments>
</comment>
<comment type="interaction">
    <interactant intactId="EBI-13959">
        <id>P23639</id>
    </interactant>
    <interactant intactId="EBI-13967">
        <id>P23638</id>
        <label>PRE9</label>
    </interactant>
    <organismsDiffer>false</organismsDiffer>
    <experiments>4</experiments>
</comment>
<comment type="interaction">
    <interactant intactId="EBI-13959">
        <id>P23639</id>
    </interactant>
    <interactant intactId="EBI-11219">
        <id>P43588</id>
        <label>RPN11</label>
    </interactant>
    <organismsDiffer>false</organismsDiffer>
    <experiments>2</experiments>
</comment>
<comment type="interaction">
    <interactant intactId="EBI-13959">
        <id>P23639</id>
    </interactant>
    <interactant intactId="EBI-13975">
        <id>P21243</id>
        <label>SCL1</label>
    </interactant>
    <organismsDiffer>false</organismsDiffer>
    <experiments>9</experiments>
</comment>
<comment type="subcellular location">
    <subcellularLocation>
        <location>Cytoplasm</location>
    </subcellularLocation>
    <subcellularLocation>
        <location>Nucleus</location>
    </subcellularLocation>
</comment>
<comment type="miscellaneous">
    <text evidence="2">Present with 7060 molecules/cell in log phase SD medium.</text>
</comment>
<comment type="similarity">
    <text evidence="1">Belongs to the peptidase T1A family.</text>
</comment>
<evidence type="ECO:0000255" key="1">
    <source>
        <dbReference type="PROSITE-ProRule" id="PRU00808"/>
    </source>
</evidence>
<evidence type="ECO:0000269" key="2">
    <source>
    </source>
</evidence>
<evidence type="ECO:0000269" key="3">
    <source>
    </source>
</evidence>
<evidence type="ECO:0007744" key="4">
    <source>
    </source>
</evidence>
<evidence type="ECO:0007829" key="5">
    <source>
        <dbReference type="PDB" id="1G0U"/>
    </source>
</evidence>
<evidence type="ECO:0007829" key="6">
    <source>
        <dbReference type="PDB" id="1G65"/>
    </source>
</evidence>
<evidence type="ECO:0007829" key="7">
    <source>
        <dbReference type="PDB" id="1RYP"/>
    </source>
</evidence>
<evidence type="ECO:0007829" key="8">
    <source>
        <dbReference type="PDB" id="8RVL"/>
    </source>
</evidence>
<protein>
    <recommendedName>
        <fullName>Proteasome subunit alpha type-2</fullName>
    </recommendedName>
    <alternativeName>
        <fullName>Macropain subunit Y7</fullName>
    </alternativeName>
    <alternativeName>
        <fullName>Multicatalytic endopeptidase complex subunit Y7</fullName>
    </alternativeName>
    <alternativeName>
        <fullName>Proteasome component Y7</fullName>
    </alternativeName>
    <alternativeName>
        <fullName>Proteinase YSCE subunit 7</fullName>
    </alternativeName>
</protein>
<organism>
    <name type="scientific">Saccharomyces cerevisiae (strain ATCC 204508 / S288c)</name>
    <name type="common">Baker's yeast</name>
    <dbReference type="NCBI Taxonomy" id="559292"/>
    <lineage>
        <taxon>Eukaryota</taxon>
        <taxon>Fungi</taxon>
        <taxon>Dikarya</taxon>
        <taxon>Ascomycota</taxon>
        <taxon>Saccharomycotina</taxon>
        <taxon>Saccharomycetes</taxon>
        <taxon>Saccharomycetales</taxon>
        <taxon>Saccharomycetaceae</taxon>
        <taxon>Saccharomyces</taxon>
    </lineage>
</organism>
<gene>
    <name type="primary">PRE8</name>
    <name type="synonym">PRS4</name>
    <name type="ordered locus">YML092C</name>
</gene>
<feature type="chain" id="PRO_0000124090" description="Proteasome subunit alpha type-2">
    <location>
        <begin position="1"/>
        <end position="250"/>
    </location>
</feature>
<feature type="cross-link" description="Glycyl lysine isopeptide (Lys-Gly) (interchain with G-Cter in ubiquitin)" evidence="4">
    <location>
        <position position="108"/>
    </location>
</feature>
<feature type="strand" evidence="6">
    <location>
        <begin position="7"/>
        <end position="10"/>
    </location>
</feature>
<feature type="turn" evidence="5">
    <location>
        <begin position="14"/>
        <end position="16"/>
    </location>
</feature>
<feature type="helix" evidence="7">
    <location>
        <begin position="19"/>
        <end position="29"/>
    </location>
</feature>
<feature type="strand" evidence="7">
    <location>
        <begin position="34"/>
        <end position="39"/>
    </location>
</feature>
<feature type="strand" evidence="7">
    <location>
        <begin position="42"/>
        <end position="48"/>
    </location>
</feature>
<feature type="strand" evidence="7">
    <location>
        <begin position="54"/>
        <end position="56"/>
    </location>
</feature>
<feature type="helix" evidence="7">
    <location>
        <begin position="58"/>
        <end position="60"/>
    </location>
</feature>
<feature type="strand" evidence="7">
    <location>
        <begin position="63"/>
        <end position="68"/>
    </location>
</feature>
<feature type="strand" evidence="7">
    <location>
        <begin position="71"/>
        <end position="77"/>
    </location>
</feature>
<feature type="helix" evidence="7">
    <location>
        <begin position="79"/>
        <end position="95"/>
    </location>
</feature>
<feature type="helix" evidence="7">
    <location>
        <begin position="98"/>
        <end position="101"/>
    </location>
</feature>
<feature type="helix" evidence="7">
    <location>
        <begin position="107"/>
        <end position="120"/>
    </location>
</feature>
<feature type="turn" evidence="7">
    <location>
        <begin position="121"/>
        <end position="123"/>
    </location>
</feature>
<feature type="strand" evidence="8">
    <location>
        <begin position="125"/>
        <end position="127"/>
    </location>
</feature>
<feature type="strand" evidence="7">
    <location>
        <begin position="132"/>
        <end position="140"/>
    </location>
</feature>
<feature type="turn" evidence="7">
    <location>
        <begin position="141"/>
        <end position="143"/>
    </location>
</feature>
<feature type="strand" evidence="7">
    <location>
        <begin position="144"/>
        <end position="150"/>
    </location>
</feature>
<feature type="strand" evidence="7">
    <location>
        <begin position="156"/>
        <end position="165"/>
    </location>
</feature>
<feature type="helix" evidence="7">
    <location>
        <begin position="168"/>
        <end position="178"/>
    </location>
</feature>
<feature type="helix" evidence="7">
    <location>
        <begin position="185"/>
        <end position="199"/>
    </location>
</feature>
<feature type="turn" evidence="7">
    <location>
        <begin position="206"/>
        <end position="208"/>
    </location>
</feature>
<feature type="strand" evidence="7">
    <location>
        <begin position="209"/>
        <end position="214"/>
    </location>
</feature>
<feature type="helix" evidence="7">
    <location>
        <begin position="219"/>
        <end position="221"/>
    </location>
</feature>
<feature type="strand" evidence="7">
    <location>
        <begin position="223"/>
        <end position="226"/>
    </location>
</feature>
<feature type="strand" evidence="7">
    <location>
        <begin position="234"/>
        <end position="237"/>
    </location>
</feature>
<feature type="helix" evidence="7">
    <location>
        <begin position="240"/>
        <end position="247"/>
    </location>
</feature>
<dbReference type="EMBL" id="X56731">
    <property type="protein sequence ID" value="CAA40055.1"/>
    <property type="molecule type" value="Genomic_DNA"/>
</dbReference>
<dbReference type="EMBL" id="Z46660">
    <property type="protein sequence ID" value="CAA86646.1"/>
    <property type="molecule type" value="Genomic_DNA"/>
</dbReference>
<dbReference type="EMBL" id="AY557762">
    <property type="protein sequence ID" value="AAS56088.1"/>
    <property type="molecule type" value="Genomic_DNA"/>
</dbReference>
<dbReference type="EMBL" id="BK006946">
    <property type="protein sequence ID" value="DAA09807.1"/>
    <property type="molecule type" value="Genomic_DNA"/>
</dbReference>
<dbReference type="PIR" id="S12938">
    <property type="entry name" value="SNBYY7"/>
</dbReference>
<dbReference type="RefSeq" id="NP_013618.1">
    <property type="nucleotide sequence ID" value="NM_001182451.1"/>
</dbReference>
<dbReference type="PDB" id="1FNT">
    <property type="method" value="X-ray"/>
    <property type="resolution" value="3.20 A"/>
    <property type="chains" value="B/P=1-250"/>
</dbReference>
<dbReference type="PDB" id="1G0U">
    <property type="method" value="X-ray"/>
    <property type="resolution" value="2.40 A"/>
    <property type="chains" value="A/O=1-250"/>
</dbReference>
<dbReference type="PDB" id="1G65">
    <property type="method" value="X-ray"/>
    <property type="resolution" value="2.25 A"/>
    <property type="chains" value="A/O=1-250"/>
</dbReference>
<dbReference type="PDB" id="1JD2">
    <property type="method" value="X-ray"/>
    <property type="resolution" value="3.00 A"/>
    <property type="chains" value="A/V=1-250"/>
</dbReference>
<dbReference type="PDB" id="1RYP">
    <property type="method" value="X-ray"/>
    <property type="resolution" value="1.90 A"/>
    <property type="chains" value="B/P=1-250"/>
</dbReference>
<dbReference type="PDB" id="1Z7Q">
    <property type="method" value="X-ray"/>
    <property type="resolution" value="3.22 A"/>
    <property type="chains" value="B/P=1-250"/>
</dbReference>
<dbReference type="PDB" id="2F16">
    <property type="method" value="X-ray"/>
    <property type="resolution" value="2.80 A"/>
    <property type="chains" value="A/O=1-250"/>
</dbReference>
<dbReference type="PDB" id="2FAK">
    <property type="method" value="X-ray"/>
    <property type="resolution" value="2.80 A"/>
    <property type="chains" value="A/O=1-250"/>
</dbReference>
<dbReference type="PDB" id="2GPL">
    <property type="method" value="X-ray"/>
    <property type="resolution" value="2.81 A"/>
    <property type="chains" value="A/O=1-250"/>
</dbReference>
<dbReference type="PDB" id="2ZCY">
    <property type="method" value="X-ray"/>
    <property type="resolution" value="2.90 A"/>
    <property type="chains" value="A/O=1-250"/>
</dbReference>
<dbReference type="PDB" id="3BDM">
    <property type="method" value="X-ray"/>
    <property type="resolution" value="2.70 A"/>
    <property type="chains" value="A/O=1-250"/>
</dbReference>
<dbReference type="PDB" id="3D29">
    <property type="method" value="X-ray"/>
    <property type="resolution" value="2.60 A"/>
    <property type="chains" value="A/O=1-250"/>
</dbReference>
<dbReference type="PDB" id="3DY3">
    <property type="method" value="X-ray"/>
    <property type="resolution" value="2.81 A"/>
    <property type="chains" value="A/O=1-250"/>
</dbReference>
<dbReference type="PDB" id="3DY4">
    <property type="method" value="X-ray"/>
    <property type="resolution" value="2.80 A"/>
    <property type="chains" value="A/O=1-250"/>
</dbReference>
<dbReference type="PDB" id="3E47">
    <property type="method" value="X-ray"/>
    <property type="resolution" value="3.00 A"/>
    <property type="chains" value="A/O=1-250"/>
</dbReference>
<dbReference type="PDB" id="3GPJ">
    <property type="method" value="X-ray"/>
    <property type="resolution" value="2.70 A"/>
    <property type="chains" value="A/O=1-250"/>
</dbReference>
<dbReference type="PDB" id="3GPT">
    <property type="method" value="X-ray"/>
    <property type="resolution" value="2.41 A"/>
    <property type="chains" value="A/O=1-250"/>
</dbReference>
<dbReference type="PDB" id="3GPW">
    <property type="method" value="X-ray"/>
    <property type="resolution" value="2.50 A"/>
    <property type="chains" value="A/O=1-250"/>
</dbReference>
<dbReference type="PDB" id="3HYE">
    <property type="method" value="X-ray"/>
    <property type="resolution" value="2.50 A"/>
    <property type="chains" value="A/O=1-250"/>
</dbReference>
<dbReference type="PDB" id="3JCO">
    <property type="method" value="EM"/>
    <property type="resolution" value="4.80 A"/>
    <property type="chains" value="B/b=1-250"/>
</dbReference>
<dbReference type="PDB" id="3JCP">
    <property type="method" value="EM"/>
    <property type="resolution" value="4.60 A"/>
    <property type="chains" value="B/b=1-250"/>
</dbReference>
<dbReference type="PDB" id="3MG0">
    <property type="method" value="X-ray"/>
    <property type="resolution" value="2.68 A"/>
    <property type="chains" value="A/O=1-250"/>
</dbReference>
<dbReference type="PDB" id="3MG4">
    <property type="method" value="X-ray"/>
    <property type="resolution" value="3.11 A"/>
    <property type="chains" value="A/O=1-250"/>
</dbReference>
<dbReference type="PDB" id="3MG6">
    <property type="method" value="X-ray"/>
    <property type="resolution" value="2.60 A"/>
    <property type="chains" value="A/O=1-250"/>
</dbReference>
<dbReference type="PDB" id="3MG7">
    <property type="method" value="X-ray"/>
    <property type="resolution" value="2.78 A"/>
    <property type="chains" value="A/O=1-250"/>
</dbReference>
<dbReference type="PDB" id="3MG8">
    <property type="method" value="X-ray"/>
    <property type="resolution" value="2.59 A"/>
    <property type="chains" value="A/O=1-250"/>
</dbReference>
<dbReference type="PDB" id="3NZJ">
    <property type="method" value="X-ray"/>
    <property type="resolution" value="2.40 A"/>
    <property type="chains" value="A/O=1-250"/>
</dbReference>
<dbReference type="PDB" id="3NZW">
    <property type="method" value="X-ray"/>
    <property type="resolution" value="2.50 A"/>
    <property type="chains" value="A/O=1-250"/>
</dbReference>
<dbReference type="PDB" id="3NZX">
    <property type="method" value="X-ray"/>
    <property type="resolution" value="2.70 A"/>
    <property type="chains" value="A/O=1-250"/>
</dbReference>
<dbReference type="PDB" id="3OEU">
    <property type="method" value="X-ray"/>
    <property type="resolution" value="2.60 A"/>
    <property type="chains" value="A/O=1-250"/>
</dbReference>
<dbReference type="PDB" id="3OEV">
    <property type="method" value="X-ray"/>
    <property type="resolution" value="2.85 A"/>
    <property type="chains" value="A/O=1-250"/>
</dbReference>
<dbReference type="PDB" id="3OKJ">
    <property type="method" value="X-ray"/>
    <property type="resolution" value="2.70 A"/>
    <property type="chains" value="A/O=1-250"/>
</dbReference>
<dbReference type="PDB" id="3SDI">
    <property type="method" value="X-ray"/>
    <property type="resolution" value="2.65 A"/>
    <property type="chains" value="A/O=1-250"/>
</dbReference>
<dbReference type="PDB" id="3SDK">
    <property type="method" value="X-ray"/>
    <property type="resolution" value="2.70 A"/>
    <property type="chains" value="A/O=1-250"/>
</dbReference>
<dbReference type="PDB" id="3SHJ">
    <property type="method" value="X-ray"/>
    <property type="resolution" value="2.80 A"/>
    <property type="chains" value="A/O=1-250"/>
</dbReference>
<dbReference type="PDB" id="3TDD">
    <property type="method" value="X-ray"/>
    <property type="resolution" value="2.70 A"/>
    <property type="chains" value="A/O=1-250"/>
</dbReference>
<dbReference type="PDB" id="3UN4">
    <property type="method" value="X-ray"/>
    <property type="resolution" value="3.40 A"/>
    <property type="chains" value="A/O=1-250"/>
</dbReference>
<dbReference type="PDB" id="3UN8">
    <property type="method" value="X-ray"/>
    <property type="resolution" value="2.70 A"/>
    <property type="chains" value="A/O=1-250"/>
</dbReference>
<dbReference type="PDB" id="3WXR">
    <property type="method" value="X-ray"/>
    <property type="resolution" value="3.15 A"/>
    <property type="chains" value="B/P=1-250"/>
</dbReference>
<dbReference type="PDB" id="4CR2">
    <property type="method" value="EM"/>
    <property type="resolution" value="7.70 A"/>
    <property type="chains" value="B=1-250"/>
</dbReference>
<dbReference type="PDB" id="4CR3">
    <property type="method" value="EM"/>
    <property type="resolution" value="9.30 A"/>
    <property type="chains" value="B=1-250"/>
</dbReference>
<dbReference type="PDB" id="4CR4">
    <property type="method" value="EM"/>
    <property type="resolution" value="8.80 A"/>
    <property type="chains" value="B=1-250"/>
</dbReference>
<dbReference type="PDB" id="4EU2">
    <property type="method" value="X-ray"/>
    <property type="resolution" value="2.51 A"/>
    <property type="chains" value="B/P=1-250"/>
</dbReference>
<dbReference type="PDB" id="4FZC">
    <property type="method" value="X-ray"/>
    <property type="resolution" value="2.80 A"/>
    <property type="chains" value="A/O=1-250"/>
</dbReference>
<dbReference type="PDB" id="4FZG">
    <property type="method" value="X-ray"/>
    <property type="resolution" value="3.00 A"/>
    <property type="chains" value="A/O=1-250"/>
</dbReference>
<dbReference type="PDB" id="4G4S">
    <property type="method" value="X-ray"/>
    <property type="resolution" value="2.49 A"/>
    <property type="chains" value="B=1-250"/>
</dbReference>
<dbReference type="PDB" id="4GK7">
    <property type="method" value="X-ray"/>
    <property type="resolution" value="2.80 A"/>
    <property type="chains" value="A/O=1-250"/>
</dbReference>
<dbReference type="PDB" id="4HNP">
    <property type="method" value="X-ray"/>
    <property type="resolution" value="2.80 A"/>
    <property type="chains" value="A/O=1-250"/>
</dbReference>
<dbReference type="PDB" id="4HRC">
    <property type="method" value="X-ray"/>
    <property type="resolution" value="2.80 A"/>
    <property type="chains" value="A/O=2-250"/>
</dbReference>
<dbReference type="PDB" id="4HRD">
    <property type="method" value="X-ray"/>
    <property type="resolution" value="2.80 A"/>
    <property type="chains" value="A/O=1-250"/>
</dbReference>
<dbReference type="PDB" id="4INR">
    <property type="method" value="X-ray"/>
    <property type="resolution" value="2.70 A"/>
    <property type="chains" value="A/O=1-250"/>
</dbReference>
<dbReference type="PDB" id="4INT">
    <property type="method" value="X-ray"/>
    <property type="resolution" value="2.90 A"/>
    <property type="chains" value="A/O=1-250"/>
</dbReference>
<dbReference type="PDB" id="4INU">
    <property type="method" value="X-ray"/>
    <property type="resolution" value="3.10 A"/>
    <property type="chains" value="A/O=1-250"/>
</dbReference>
<dbReference type="PDB" id="4J70">
    <property type="method" value="X-ray"/>
    <property type="resolution" value="2.80 A"/>
    <property type="chains" value="A/O=1-250"/>
</dbReference>
<dbReference type="PDB" id="4JSQ">
    <property type="method" value="X-ray"/>
    <property type="resolution" value="2.80 A"/>
    <property type="chains" value="A/O=1-250"/>
</dbReference>
<dbReference type="PDB" id="4JSU">
    <property type="method" value="X-ray"/>
    <property type="resolution" value="2.90 A"/>
    <property type="chains" value="A/O=1-250"/>
</dbReference>
<dbReference type="PDB" id="4JT0">
    <property type="method" value="X-ray"/>
    <property type="resolution" value="3.10 A"/>
    <property type="chains" value="A/O=1-250"/>
</dbReference>
<dbReference type="PDB" id="4LQI">
    <property type="method" value="X-ray"/>
    <property type="resolution" value="2.70 A"/>
    <property type="chains" value="A/O=1-250"/>
</dbReference>
<dbReference type="PDB" id="4LTC">
    <property type="method" value="X-ray"/>
    <property type="resolution" value="2.50 A"/>
    <property type="chains" value="A/O=1-250"/>
</dbReference>
<dbReference type="PDB" id="4NNN">
    <property type="method" value="X-ray"/>
    <property type="resolution" value="2.50 A"/>
    <property type="chains" value="A/O=1-250"/>
</dbReference>
<dbReference type="PDB" id="4NNW">
    <property type="method" value="X-ray"/>
    <property type="resolution" value="2.60 A"/>
    <property type="chains" value="A/O=1-250"/>
</dbReference>
<dbReference type="PDB" id="4NO1">
    <property type="method" value="X-ray"/>
    <property type="resolution" value="2.50 A"/>
    <property type="chains" value="A/O=1-250"/>
</dbReference>
<dbReference type="PDB" id="4NO6">
    <property type="method" value="X-ray"/>
    <property type="resolution" value="3.00 A"/>
    <property type="chains" value="A/O=1-250"/>
</dbReference>
<dbReference type="PDB" id="4NO8">
    <property type="method" value="X-ray"/>
    <property type="resolution" value="2.70 A"/>
    <property type="chains" value="A/O=1-250"/>
</dbReference>
<dbReference type="PDB" id="4NO9">
    <property type="method" value="X-ray"/>
    <property type="resolution" value="2.90 A"/>
    <property type="chains" value="A/O=1-250"/>
</dbReference>
<dbReference type="PDB" id="4Q1S">
    <property type="method" value="X-ray"/>
    <property type="resolution" value="2.60 A"/>
    <property type="chains" value="A/O=1-250"/>
</dbReference>
<dbReference type="PDB" id="4QBY">
    <property type="method" value="X-ray"/>
    <property type="resolution" value="3.00 A"/>
    <property type="chains" value="A/O=1-250"/>
</dbReference>
<dbReference type="PDB" id="4QLQ">
    <property type="method" value="X-ray"/>
    <property type="resolution" value="2.40 A"/>
    <property type="chains" value="A/O=1-250"/>
</dbReference>
<dbReference type="PDB" id="4QLS">
    <property type="method" value="X-ray"/>
    <property type="resolution" value="2.80 A"/>
    <property type="chains" value="A/O=1-250"/>
</dbReference>
<dbReference type="PDB" id="4QLT">
    <property type="method" value="X-ray"/>
    <property type="resolution" value="2.80 A"/>
    <property type="chains" value="A/O=1-250"/>
</dbReference>
<dbReference type="PDB" id="4QLU">
    <property type="method" value="X-ray"/>
    <property type="resolution" value="2.80 A"/>
    <property type="chains" value="A/O=1-250"/>
</dbReference>
<dbReference type="PDB" id="4QLV">
    <property type="method" value="X-ray"/>
    <property type="resolution" value="2.90 A"/>
    <property type="chains" value="A/O=1-250"/>
</dbReference>
<dbReference type="PDB" id="4QUX">
    <property type="method" value="X-ray"/>
    <property type="resolution" value="3.00 A"/>
    <property type="chains" value="A/O=1-250"/>
</dbReference>
<dbReference type="PDB" id="4QUY">
    <property type="method" value="X-ray"/>
    <property type="resolution" value="2.80 A"/>
    <property type="chains" value="A/O=1-250"/>
</dbReference>
<dbReference type="PDB" id="4QV0">
    <property type="method" value="X-ray"/>
    <property type="resolution" value="3.10 A"/>
    <property type="chains" value="A/O=1-250"/>
</dbReference>
<dbReference type="PDB" id="4QV1">
    <property type="method" value="X-ray"/>
    <property type="resolution" value="2.50 A"/>
    <property type="chains" value="A/O=1-250"/>
</dbReference>
<dbReference type="PDB" id="4QV3">
    <property type="method" value="X-ray"/>
    <property type="resolution" value="3.00 A"/>
    <property type="chains" value="A/O=1-250"/>
</dbReference>
<dbReference type="PDB" id="4QV4">
    <property type="method" value="X-ray"/>
    <property type="resolution" value="2.70 A"/>
    <property type="chains" value="A/O=1-250"/>
</dbReference>
<dbReference type="PDB" id="4QV5">
    <property type="method" value="X-ray"/>
    <property type="resolution" value="2.70 A"/>
    <property type="chains" value="A/O=1-250"/>
</dbReference>
<dbReference type="PDB" id="4QV6">
    <property type="method" value="X-ray"/>
    <property type="resolution" value="2.80 A"/>
    <property type="chains" value="A/O=1-250"/>
</dbReference>
<dbReference type="PDB" id="4QV7">
    <property type="method" value="X-ray"/>
    <property type="resolution" value="2.60 A"/>
    <property type="chains" value="A/O=1-250"/>
</dbReference>
<dbReference type="PDB" id="4QV8">
    <property type="method" value="X-ray"/>
    <property type="resolution" value="2.90 A"/>
    <property type="chains" value="A/O=1-250"/>
</dbReference>
<dbReference type="PDB" id="4QV9">
    <property type="method" value="X-ray"/>
    <property type="resolution" value="2.60 A"/>
    <property type="chains" value="A/O=1-250"/>
</dbReference>
<dbReference type="PDB" id="4QVL">
    <property type="method" value="X-ray"/>
    <property type="resolution" value="2.80 A"/>
    <property type="chains" value="A/O=1-250"/>
</dbReference>
<dbReference type="PDB" id="4QVM">
    <property type="method" value="X-ray"/>
    <property type="resolution" value="2.80 A"/>
    <property type="chains" value="A/O=1-250"/>
</dbReference>
<dbReference type="PDB" id="4QVN">
    <property type="method" value="X-ray"/>
    <property type="resolution" value="2.90 A"/>
    <property type="chains" value="A/O=1-250"/>
</dbReference>
<dbReference type="PDB" id="4QVP">
    <property type="method" value="X-ray"/>
    <property type="resolution" value="2.30 A"/>
    <property type="chains" value="A/O=1-250"/>
</dbReference>
<dbReference type="PDB" id="4QVQ">
    <property type="method" value="X-ray"/>
    <property type="resolution" value="2.60 A"/>
    <property type="chains" value="A/O=1-250"/>
</dbReference>
<dbReference type="PDB" id="4QVV">
    <property type="method" value="X-ray"/>
    <property type="resolution" value="2.80 A"/>
    <property type="chains" value="A/O=1-250"/>
</dbReference>
<dbReference type="PDB" id="4QVW">
    <property type="method" value="X-ray"/>
    <property type="resolution" value="3.00 A"/>
    <property type="chains" value="A/O=1-250"/>
</dbReference>
<dbReference type="PDB" id="4QVY">
    <property type="method" value="X-ray"/>
    <property type="resolution" value="2.51 A"/>
    <property type="chains" value="A/O=1-250"/>
</dbReference>
<dbReference type="PDB" id="4QW0">
    <property type="method" value="X-ray"/>
    <property type="resolution" value="2.90 A"/>
    <property type="chains" value="A/O=1-250"/>
</dbReference>
<dbReference type="PDB" id="4QW1">
    <property type="method" value="X-ray"/>
    <property type="resolution" value="2.90 A"/>
    <property type="chains" value="A/O=1-250"/>
</dbReference>
<dbReference type="PDB" id="4QW3">
    <property type="method" value="X-ray"/>
    <property type="resolution" value="2.90 A"/>
    <property type="chains" value="A/O=1-250"/>
</dbReference>
<dbReference type="PDB" id="4QW4">
    <property type="method" value="X-ray"/>
    <property type="resolution" value="2.80 A"/>
    <property type="chains" value="A/O=1-250"/>
</dbReference>
<dbReference type="PDB" id="4QW5">
    <property type="method" value="X-ray"/>
    <property type="resolution" value="3.00 A"/>
    <property type="chains" value="A/O=1-250"/>
</dbReference>
<dbReference type="PDB" id="4QW6">
    <property type="method" value="X-ray"/>
    <property type="resolution" value="2.90 A"/>
    <property type="chains" value="A/O=1-250"/>
</dbReference>
<dbReference type="PDB" id="4QW7">
    <property type="method" value="X-ray"/>
    <property type="resolution" value="2.70 A"/>
    <property type="chains" value="A/O=1-250"/>
</dbReference>
<dbReference type="PDB" id="4QWF">
    <property type="method" value="X-ray"/>
    <property type="resolution" value="3.00 A"/>
    <property type="chains" value="A/O=1-250"/>
</dbReference>
<dbReference type="PDB" id="4QWG">
    <property type="method" value="X-ray"/>
    <property type="resolution" value="2.60 A"/>
    <property type="chains" value="A/O=1-250"/>
</dbReference>
<dbReference type="PDB" id="4QWI">
    <property type="method" value="X-ray"/>
    <property type="resolution" value="2.60 A"/>
    <property type="chains" value="A/O=1-250"/>
</dbReference>
<dbReference type="PDB" id="4QWJ">
    <property type="method" value="X-ray"/>
    <property type="resolution" value="2.90 A"/>
    <property type="chains" value="A/O=1-250"/>
</dbReference>
<dbReference type="PDB" id="4QWK">
    <property type="method" value="X-ray"/>
    <property type="resolution" value="2.80 A"/>
    <property type="chains" value="A/O=1-250"/>
</dbReference>
<dbReference type="PDB" id="4QWL">
    <property type="method" value="X-ray"/>
    <property type="resolution" value="2.60 A"/>
    <property type="chains" value="A/O=1-250"/>
</dbReference>
<dbReference type="PDB" id="4QWR">
    <property type="method" value="X-ray"/>
    <property type="resolution" value="2.90 A"/>
    <property type="chains" value="A/O=1-250"/>
</dbReference>
<dbReference type="PDB" id="4QWS">
    <property type="method" value="X-ray"/>
    <property type="resolution" value="3.00 A"/>
    <property type="chains" value="A/O=1-250"/>
</dbReference>
<dbReference type="PDB" id="4QWU">
    <property type="method" value="X-ray"/>
    <property type="resolution" value="3.00 A"/>
    <property type="chains" value="A/O=1-250"/>
</dbReference>
<dbReference type="PDB" id="4QWX">
    <property type="method" value="X-ray"/>
    <property type="resolution" value="2.90 A"/>
    <property type="chains" value="A/O=1-250"/>
</dbReference>
<dbReference type="PDB" id="4QXJ">
    <property type="method" value="X-ray"/>
    <property type="resolution" value="2.80 A"/>
    <property type="chains" value="A/O=1-250"/>
</dbReference>
<dbReference type="PDB" id="4QZ0">
    <property type="method" value="X-ray"/>
    <property type="resolution" value="3.00 A"/>
    <property type="chains" value="A/O=1-250"/>
</dbReference>
<dbReference type="PDB" id="4QZ1">
    <property type="method" value="X-ray"/>
    <property type="resolution" value="3.00 A"/>
    <property type="chains" value="A/O=1-250"/>
</dbReference>
<dbReference type="PDB" id="4QZ2">
    <property type="method" value="X-ray"/>
    <property type="resolution" value="2.70 A"/>
    <property type="chains" value="A/O=1-250"/>
</dbReference>
<dbReference type="PDB" id="4QZ3">
    <property type="method" value="X-ray"/>
    <property type="resolution" value="2.80 A"/>
    <property type="chains" value="A/O=1-250"/>
</dbReference>
<dbReference type="PDB" id="4QZ4">
    <property type="method" value="X-ray"/>
    <property type="resolution" value="3.00 A"/>
    <property type="chains" value="A/O=1-250"/>
</dbReference>
<dbReference type="PDB" id="4QZ5">
    <property type="method" value="X-ray"/>
    <property type="resolution" value="2.80 A"/>
    <property type="chains" value="A/O=1-250"/>
</dbReference>
<dbReference type="PDB" id="4QZ6">
    <property type="method" value="X-ray"/>
    <property type="resolution" value="2.90 A"/>
    <property type="chains" value="A/O=1-250"/>
</dbReference>
<dbReference type="PDB" id="4QZ7">
    <property type="method" value="X-ray"/>
    <property type="resolution" value="2.80 A"/>
    <property type="chains" value="A/O=1-250"/>
</dbReference>
<dbReference type="PDB" id="4QZW">
    <property type="method" value="X-ray"/>
    <property type="resolution" value="3.00 A"/>
    <property type="chains" value="A/O=1-250"/>
</dbReference>
<dbReference type="PDB" id="4QZX">
    <property type="method" value="X-ray"/>
    <property type="resolution" value="2.60 A"/>
    <property type="chains" value="A/O=1-250"/>
</dbReference>
<dbReference type="PDB" id="4QZZ">
    <property type="method" value="X-ray"/>
    <property type="resolution" value="2.90 A"/>
    <property type="chains" value="A/O=1-250"/>
</dbReference>
<dbReference type="PDB" id="4R00">
    <property type="method" value="X-ray"/>
    <property type="resolution" value="2.80 A"/>
    <property type="chains" value="A/O=1-250"/>
</dbReference>
<dbReference type="PDB" id="4R02">
    <property type="method" value="X-ray"/>
    <property type="resolution" value="2.50 A"/>
    <property type="chains" value="A/O=1-250"/>
</dbReference>
<dbReference type="PDB" id="4R17">
    <property type="method" value="X-ray"/>
    <property type="resolution" value="2.10 A"/>
    <property type="chains" value="A/O=1-250"/>
</dbReference>
<dbReference type="PDB" id="4R18">
    <property type="method" value="X-ray"/>
    <property type="resolution" value="2.40 A"/>
    <property type="chains" value="A/O=1-250"/>
</dbReference>
<dbReference type="PDB" id="4RUR">
    <property type="method" value="X-ray"/>
    <property type="resolution" value="2.50 A"/>
    <property type="chains" value="A/O=1-250"/>
</dbReference>
<dbReference type="PDB" id="4V7O">
    <property type="method" value="X-ray"/>
    <property type="resolution" value="3.00 A"/>
    <property type="chains" value="AG/AS/BB/BP=20-250"/>
</dbReference>
<dbReference type="PDB" id="4X6Z">
    <property type="method" value="X-ray"/>
    <property type="resolution" value="2.70 A"/>
    <property type="chains" value="B/P=1-250"/>
</dbReference>
<dbReference type="PDB" id="4Y69">
    <property type="method" value="X-ray"/>
    <property type="resolution" value="2.90 A"/>
    <property type="chains" value="A/O=1-250"/>
</dbReference>
<dbReference type="PDB" id="4Y6A">
    <property type="method" value="X-ray"/>
    <property type="resolution" value="2.60 A"/>
    <property type="chains" value="A/O=1-250"/>
</dbReference>
<dbReference type="PDB" id="4Y6V">
    <property type="method" value="X-ray"/>
    <property type="resolution" value="2.80 A"/>
    <property type="chains" value="A/O=1-250"/>
</dbReference>
<dbReference type="PDB" id="4Y6Z">
    <property type="method" value="X-ray"/>
    <property type="resolution" value="2.70 A"/>
    <property type="chains" value="A/O=1-250"/>
</dbReference>
<dbReference type="PDB" id="4Y70">
    <property type="method" value="X-ray"/>
    <property type="resolution" value="2.40 A"/>
    <property type="chains" value="A/O=1-250"/>
</dbReference>
<dbReference type="PDB" id="4Y74">
    <property type="method" value="X-ray"/>
    <property type="resolution" value="2.70 A"/>
    <property type="chains" value="A/O=1-250"/>
</dbReference>
<dbReference type="PDB" id="4Y75">
    <property type="method" value="X-ray"/>
    <property type="resolution" value="2.80 A"/>
    <property type="chains" value="A/O=1-250"/>
</dbReference>
<dbReference type="PDB" id="4Y77">
    <property type="method" value="X-ray"/>
    <property type="resolution" value="2.50 A"/>
    <property type="chains" value="A/O=1-250"/>
</dbReference>
<dbReference type="PDB" id="4Y78">
    <property type="method" value="X-ray"/>
    <property type="resolution" value="2.80 A"/>
    <property type="chains" value="A/O=1-250"/>
</dbReference>
<dbReference type="PDB" id="4Y7W">
    <property type="method" value="X-ray"/>
    <property type="resolution" value="2.50 A"/>
    <property type="chains" value="A/O=1-250"/>
</dbReference>
<dbReference type="PDB" id="4Y7X">
    <property type="method" value="X-ray"/>
    <property type="resolution" value="2.60 A"/>
    <property type="chains" value="A/O=1-250"/>
</dbReference>
<dbReference type="PDB" id="4Y7Y">
    <property type="method" value="X-ray"/>
    <property type="resolution" value="2.40 A"/>
    <property type="chains" value="A/O=1-250"/>
</dbReference>
<dbReference type="PDB" id="4Y80">
    <property type="method" value="X-ray"/>
    <property type="resolution" value="2.50 A"/>
    <property type="chains" value="A/O=1-250"/>
</dbReference>
<dbReference type="PDB" id="4Y81">
    <property type="method" value="X-ray"/>
    <property type="resolution" value="2.80 A"/>
    <property type="chains" value="A/O=1-250"/>
</dbReference>
<dbReference type="PDB" id="4Y82">
    <property type="method" value="X-ray"/>
    <property type="resolution" value="2.80 A"/>
    <property type="chains" value="A/O=1-250"/>
</dbReference>
<dbReference type="PDB" id="4Y84">
    <property type="method" value="X-ray"/>
    <property type="resolution" value="2.70 A"/>
    <property type="chains" value="A/O=1-250"/>
</dbReference>
<dbReference type="PDB" id="4Y8G">
    <property type="method" value="X-ray"/>
    <property type="resolution" value="2.60 A"/>
    <property type="chains" value="A/O=1-250"/>
</dbReference>
<dbReference type="PDB" id="4Y8H">
    <property type="method" value="X-ray"/>
    <property type="resolution" value="2.50 A"/>
    <property type="chains" value="A/O=1-250"/>
</dbReference>
<dbReference type="PDB" id="4Y8I">
    <property type="method" value="X-ray"/>
    <property type="resolution" value="2.60 A"/>
    <property type="chains" value="A/O=1-250"/>
</dbReference>
<dbReference type="PDB" id="4Y8J">
    <property type="method" value="X-ray"/>
    <property type="resolution" value="2.70 A"/>
    <property type="chains" value="A/O=1-250"/>
</dbReference>
<dbReference type="PDB" id="4Y8K">
    <property type="method" value="X-ray"/>
    <property type="resolution" value="2.60 A"/>
    <property type="chains" value="A/O=1-250"/>
</dbReference>
<dbReference type="PDB" id="4Y8L">
    <property type="method" value="X-ray"/>
    <property type="resolution" value="2.40 A"/>
    <property type="chains" value="A/O=1-250"/>
</dbReference>
<dbReference type="PDB" id="4Y8M">
    <property type="method" value="X-ray"/>
    <property type="resolution" value="2.80 A"/>
    <property type="chains" value="A/O=1-250"/>
</dbReference>
<dbReference type="PDB" id="4Y8N">
    <property type="method" value="X-ray"/>
    <property type="resolution" value="2.60 A"/>
    <property type="chains" value="A/O=1-250"/>
</dbReference>
<dbReference type="PDB" id="4Y8O">
    <property type="method" value="X-ray"/>
    <property type="resolution" value="2.70 A"/>
    <property type="chains" value="A/O=1-250"/>
</dbReference>
<dbReference type="PDB" id="4Y8P">
    <property type="method" value="X-ray"/>
    <property type="resolution" value="2.80 A"/>
    <property type="chains" value="A/O=1-250"/>
</dbReference>
<dbReference type="PDB" id="4Y8Q">
    <property type="method" value="X-ray"/>
    <property type="resolution" value="2.60 A"/>
    <property type="chains" value="A/O=1-250"/>
</dbReference>
<dbReference type="PDB" id="4Y8R">
    <property type="method" value="X-ray"/>
    <property type="resolution" value="2.70 A"/>
    <property type="chains" value="A/O=1-250"/>
</dbReference>
<dbReference type="PDB" id="4Y8S">
    <property type="method" value="X-ray"/>
    <property type="resolution" value="2.70 A"/>
    <property type="chains" value="A/O=1-250"/>
</dbReference>
<dbReference type="PDB" id="4Y8T">
    <property type="method" value="X-ray"/>
    <property type="resolution" value="2.70 A"/>
    <property type="chains" value="A/O=1-250"/>
</dbReference>
<dbReference type="PDB" id="4Y8U">
    <property type="method" value="X-ray"/>
    <property type="resolution" value="2.90 A"/>
    <property type="chains" value="A/O=1-250"/>
</dbReference>
<dbReference type="PDB" id="4Y9Y">
    <property type="method" value="X-ray"/>
    <property type="resolution" value="2.80 A"/>
    <property type="chains" value="A/O=1-250"/>
</dbReference>
<dbReference type="PDB" id="4Y9Z">
    <property type="method" value="X-ray"/>
    <property type="resolution" value="2.80 A"/>
    <property type="chains" value="A/O=1-250"/>
</dbReference>
<dbReference type="PDB" id="4YA0">
    <property type="method" value="X-ray"/>
    <property type="resolution" value="2.80 A"/>
    <property type="chains" value="A/O=1-250"/>
</dbReference>
<dbReference type="PDB" id="4YA1">
    <property type="method" value="X-ray"/>
    <property type="resolution" value="2.90 A"/>
    <property type="chains" value="A/O=1-250"/>
</dbReference>
<dbReference type="PDB" id="4YA2">
    <property type="method" value="X-ray"/>
    <property type="resolution" value="2.70 A"/>
    <property type="chains" value="A/O=1-250"/>
</dbReference>
<dbReference type="PDB" id="4YA3">
    <property type="method" value="X-ray"/>
    <property type="resolution" value="2.70 A"/>
    <property type="chains" value="A/O=1-250"/>
</dbReference>
<dbReference type="PDB" id="4YA4">
    <property type="method" value="X-ray"/>
    <property type="resolution" value="2.90 A"/>
    <property type="chains" value="A/O=1-250"/>
</dbReference>
<dbReference type="PDB" id="4YA5">
    <property type="method" value="X-ray"/>
    <property type="resolution" value="2.50 A"/>
    <property type="chains" value="A/O=1-250"/>
</dbReference>
<dbReference type="PDB" id="4YA7">
    <property type="method" value="X-ray"/>
    <property type="resolution" value="2.70 A"/>
    <property type="chains" value="A/O=1-250"/>
</dbReference>
<dbReference type="PDB" id="4YA9">
    <property type="method" value="X-ray"/>
    <property type="resolution" value="2.70 A"/>
    <property type="chains" value="A/O=1-250"/>
</dbReference>
<dbReference type="PDB" id="4Z1L">
    <property type="method" value="X-ray"/>
    <property type="resolution" value="3.00 A"/>
    <property type="chains" value="A/O=1-250"/>
</dbReference>
<dbReference type="PDB" id="5A5B">
    <property type="method" value="EM"/>
    <property type="resolution" value="9.50 A"/>
    <property type="chains" value="B=1-250"/>
</dbReference>
<dbReference type="PDB" id="5AHJ">
    <property type="method" value="X-ray"/>
    <property type="resolution" value="2.80 A"/>
    <property type="chains" value="A/O=1-250"/>
</dbReference>
<dbReference type="PDB" id="5BOU">
    <property type="method" value="X-ray"/>
    <property type="resolution" value="2.60 A"/>
    <property type="chains" value="A/O=1-250"/>
</dbReference>
<dbReference type="PDB" id="5BXL">
    <property type="method" value="X-ray"/>
    <property type="resolution" value="2.80 A"/>
    <property type="chains" value="A/O=1-250"/>
</dbReference>
<dbReference type="PDB" id="5BXN">
    <property type="method" value="X-ray"/>
    <property type="resolution" value="2.80 A"/>
    <property type="chains" value="A/O=1-250"/>
</dbReference>
<dbReference type="PDB" id="5CGF">
    <property type="method" value="X-ray"/>
    <property type="resolution" value="2.80 A"/>
    <property type="chains" value="A/O=1-250"/>
</dbReference>
<dbReference type="PDB" id="5CGG">
    <property type="method" value="X-ray"/>
    <property type="resolution" value="2.90 A"/>
    <property type="chains" value="A/O=1-250"/>
</dbReference>
<dbReference type="PDB" id="5CGH">
    <property type="method" value="X-ray"/>
    <property type="resolution" value="2.50 A"/>
    <property type="chains" value="A/O=1-250"/>
</dbReference>
<dbReference type="PDB" id="5CGI">
    <property type="method" value="X-ray"/>
    <property type="resolution" value="2.80 A"/>
    <property type="chains" value="A/O=1-250"/>
</dbReference>
<dbReference type="PDB" id="5CZ4">
    <property type="method" value="X-ray"/>
    <property type="resolution" value="2.30 A"/>
    <property type="chains" value="A/O=1-250"/>
</dbReference>
<dbReference type="PDB" id="5CZ5">
    <property type="method" value="X-ray"/>
    <property type="resolution" value="2.80 A"/>
    <property type="chains" value="A/O=1-250"/>
</dbReference>
<dbReference type="PDB" id="5CZ6">
    <property type="method" value="X-ray"/>
    <property type="resolution" value="2.70 A"/>
    <property type="chains" value="A/O=1-250"/>
</dbReference>
<dbReference type="PDB" id="5CZ7">
    <property type="method" value="X-ray"/>
    <property type="resolution" value="2.50 A"/>
    <property type="chains" value="A/O=1-250"/>
</dbReference>
<dbReference type="PDB" id="5CZ8">
    <property type="method" value="X-ray"/>
    <property type="resolution" value="2.80 A"/>
    <property type="chains" value="A/O=1-250"/>
</dbReference>
<dbReference type="PDB" id="5CZ9">
    <property type="method" value="X-ray"/>
    <property type="resolution" value="2.90 A"/>
    <property type="chains" value="A/O=1-250"/>
</dbReference>
<dbReference type="PDB" id="5CZA">
    <property type="method" value="X-ray"/>
    <property type="resolution" value="2.50 A"/>
    <property type="chains" value="A/O=1-250"/>
</dbReference>
<dbReference type="PDB" id="5D0S">
    <property type="method" value="X-ray"/>
    <property type="resolution" value="2.50 A"/>
    <property type="chains" value="A/O=1-250"/>
</dbReference>
<dbReference type="PDB" id="5D0T">
    <property type="method" value="X-ray"/>
    <property type="resolution" value="2.60 A"/>
    <property type="chains" value="A/O=1-250"/>
</dbReference>
<dbReference type="PDB" id="5D0V">
    <property type="method" value="X-ray"/>
    <property type="resolution" value="2.90 A"/>
    <property type="chains" value="A/O=1-250"/>
</dbReference>
<dbReference type="PDB" id="5D0W">
    <property type="method" value="X-ray"/>
    <property type="resolution" value="2.80 A"/>
    <property type="chains" value="A/O=1-250"/>
</dbReference>
<dbReference type="PDB" id="5D0X">
    <property type="method" value="X-ray"/>
    <property type="resolution" value="2.60 A"/>
    <property type="chains" value="A/O=1-250"/>
</dbReference>
<dbReference type="PDB" id="5D0Z">
    <property type="method" value="X-ray"/>
    <property type="resolution" value="2.90 A"/>
    <property type="chains" value="A/O=1-250"/>
</dbReference>
<dbReference type="PDB" id="5DKI">
    <property type="method" value="X-ray"/>
    <property type="resolution" value="2.80 A"/>
    <property type="chains" value="A/O=1-250"/>
</dbReference>
<dbReference type="PDB" id="5DKJ">
    <property type="method" value="X-ray"/>
    <property type="resolution" value="2.80 A"/>
    <property type="chains" value="A/O=1-250"/>
</dbReference>
<dbReference type="PDB" id="5FG7">
    <property type="method" value="X-ray"/>
    <property type="resolution" value="2.70 A"/>
    <property type="chains" value="A/O=1-250"/>
</dbReference>
<dbReference type="PDB" id="5FG9">
    <property type="method" value="X-ray"/>
    <property type="resolution" value="2.60 A"/>
    <property type="chains" value="A/O=1-250"/>
</dbReference>
<dbReference type="PDB" id="5FGA">
    <property type="method" value="X-ray"/>
    <property type="resolution" value="2.70 A"/>
    <property type="chains" value="A/O=1-250"/>
</dbReference>
<dbReference type="PDB" id="5FGD">
    <property type="method" value="X-ray"/>
    <property type="resolution" value="2.80 A"/>
    <property type="chains" value="A/O=1-250"/>
</dbReference>
<dbReference type="PDB" id="5FGE">
    <property type="method" value="X-ray"/>
    <property type="resolution" value="2.60 A"/>
    <property type="chains" value="A/O=1-250"/>
</dbReference>
<dbReference type="PDB" id="5FGF">
    <property type="method" value="X-ray"/>
    <property type="resolution" value="2.60 A"/>
    <property type="chains" value="A/O=1-250"/>
</dbReference>
<dbReference type="PDB" id="5FGG">
    <property type="method" value="X-ray"/>
    <property type="resolution" value="2.70 A"/>
    <property type="chains" value="A/O=1-250"/>
</dbReference>
<dbReference type="PDB" id="5FGH">
    <property type="method" value="X-ray"/>
    <property type="resolution" value="2.80 A"/>
    <property type="chains" value="A/O=1-250"/>
</dbReference>
<dbReference type="PDB" id="5FGI">
    <property type="method" value="X-ray"/>
    <property type="resolution" value="2.90 A"/>
    <property type="chains" value="A/O=1-250"/>
</dbReference>
<dbReference type="PDB" id="5FHS">
    <property type="method" value="X-ray"/>
    <property type="resolution" value="2.70 A"/>
    <property type="chains" value="A/O=1-250"/>
</dbReference>
<dbReference type="PDB" id="5JHR">
    <property type="method" value="X-ray"/>
    <property type="resolution" value="2.90 A"/>
    <property type="chains" value="A/O=1-250"/>
</dbReference>
<dbReference type="PDB" id="5JHS">
    <property type="method" value="X-ray"/>
    <property type="resolution" value="3.00 A"/>
    <property type="chains" value="A/O=1-250"/>
</dbReference>
<dbReference type="PDB" id="5L52">
    <property type="method" value="X-ray"/>
    <property type="resolution" value="2.70 A"/>
    <property type="chains" value="A/O=1-250"/>
</dbReference>
<dbReference type="PDB" id="5L54">
    <property type="method" value="X-ray"/>
    <property type="resolution" value="2.80 A"/>
    <property type="chains" value="A/O=1-250"/>
</dbReference>
<dbReference type="PDB" id="5L55">
    <property type="method" value="X-ray"/>
    <property type="resolution" value="2.90 A"/>
    <property type="chains" value="A/O=1-250"/>
</dbReference>
<dbReference type="PDB" id="5L5A">
    <property type="method" value="X-ray"/>
    <property type="resolution" value="2.40 A"/>
    <property type="chains" value="A/O=1-250"/>
</dbReference>
<dbReference type="PDB" id="5L5B">
    <property type="method" value="X-ray"/>
    <property type="resolution" value="2.80 A"/>
    <property type="chains" value="A/O=1-250"/>
</dbReference>
<dbReference type="PDB" id="5L5D">
    <property type="method" value="X-ray"/>
    <property type="resolution" value="2.80 A"/>
    <property type="chains" value="A/O=1-250"/>
</dbReference>
<dbReference type="PDB" id="5L5E">
    <property type="method" value="X-ray"/>
    <property type="resolution" value="2.90 A"/>
    <property type="chains" value="A/O=1-250"/>
</dbReference>
<dbReference type="PDB" id="5L5F">
    <property type="method" value="X-ray"/>
    <property type="resolution" value="2.50 A"/>
    <property type="chains" value="A/O=1-250"/>
</dbReference>
<dbReference type="PDB" id="5L5H">
    <property type="method" value="X-ray"/>
    <property type="resolution" value="2.60 A"/>
    <property type="chains" value="A/O=1-250"/>
</dbReference>
<dbReference type="PDB" id="5L5I">
    <property type="method" value="X-ray"/>
    <property type="resolution" value="2.90 A"/>
    <property type="chains" value="A/O=1-250"/>
</dbReference>
<dbReference type="PDB" id="5L5J">
    <property type="method" value="X-ray"/>
    <property type="resolution" value="2.90 A"/>
    <property type="chains" value="A/O=1-250"/>
</dbReference>
<dbReference type="PDB" id="5L5O">
    <property type="method" value="X-ray"/>
    <property type="resolution" value="2.60 A"/>
    <property type="chains" value="A/O=1-250"/>
</dbReference>
<dbReference type="PDB" id="5L5P">
    <property type="method" value="X-ray"/>
    <property type="resolution" value="2.80 A"/>
    <property type="chains" value="A/O=1-250"/>
</dbReference>
<dbReference type="PDB" id="5L5Q">
    <property type="method" value="X-ray"/>
    <property type="resolution" value="2.80 A"/>
    <property type="chains" value="A/O=1-250"/>
</dbReference>
<dbReference type="PDB" id="5L5R">
    <property type="method" value="X-ray"/>
    <property type="resolution" value="2.90 A"/>
    <property type="chains" value="A/O=1-250"/>
</dbReference>
<dbReference type="PDB" id="5L5S">
    <property type="method" value="X-ray"/>
    <property type="resolution" value="2.60 A"/>
    <property type="chains" value="A/O=1-250"/>
</dbReference>
<dbReference type="PDB" id="5L5T">
    <property type="method" value="X-ray"/>
    <property type="resolution" value="2.90 A"/>
    <property type="chains" value="A/O=1-250"/>
</dbReference>
<dbReference type="PDB" id="5L5U">
    <property type="method" value="X-ray"/>
    <property type="resolution" value="2.60 A"/>
    <property type="chains" value="A/O=1-250"/>
</dbReference>
<dbReference type="PDB" id="5L5V">
    <property type="method" value="X-ray"/>
    <property type="resolution" value="2.70 A"/>
    <property type="chains" value="A/O=1-250"/>
</dbReference>
<dbReference type="PDB" id="5L5W">
    <property type="method" value="X-ray"/>
    <property type="resolution" value="2.80 A"/>
    <property type="chains" value="A/O=1-250"/>
</dbReference>
<dbReference type="PDB" id="5L5X">
    <property type="method" value="X-ray"/>
    <property type="resolution" value="2.90 A"/>
    <property type="chains" value="A/O=1-250"/>
</dbReference>
<dbReference type="PDB" id="5L5Y">
    <property type="method" value="X-ray"/>
    <property type="resolution" value="2.70 A"/>
    <property type="chains" value="A/O=1-250"/>
</dbReference>
<dbReference type="PDB" id="5L5Z">
    <property type="method" value="X-ray"/>
    <property type="resolution" value="2.70 A"/>
    <property type="chains" value="A/O=1-250"/>
</dbReference>
<dbReference type="PDB" id="5L60">
    <property type="method" value="X-ray"/>
    <property type="resolution" value="2.70 A"/>
    <property type="chains" value="A/O=1-250"/>
</dbReference>
<dbReference type="PDB" id="5L61">
    <property type="method" value="X-ray"/>
    <property type="resolution" value="2.80 A"/>
    <property type="chains" value="A/O=1-250"/>
</dbReference>
<dbReference type="PDB" id="5L62">
    <property type="method" value="X-ray"/>
    <property type="resolution" value="2.80 A"/>
    <property type="chains" value="A/O=1-250"/>
</dbReference>
<dbReference type="PDB" id="5L63">
    <property type="method" value="X-ray"/>
    <property type="resolution" value="2.70 A"/>
    <property type="chains" value="A/O=1-250"/>
</dbReference>
<dbReference type="PDB" id="5L64">
    <property type="method" value="X-ray"/>
    <property type="resolution" value="2.70 A"/>
    <property type="chains" value="A/O=1-250"/>
</dbReference>
<dbReference type="PDB" id="5L65">
    <property type="method" value="X-ray"/>
    <property type="resolution" value="2.90 A"/>
    <property type="chains" value="A/O=1-250"/>
</dbReference>
<dbReference type="PDB" id="5L66">
    <property type="method" value="X-ray"/>
    <property type="resolution" value="2.80 A"/>
    <property type="chains" value="A/O=1-250"/>
</dbReference>
<dbReference type="PDB" id="5L67">
    <property type="method" value="X-ray"/>
    <property type="resolution" value="2.60 A"/>
    <property type="chains" value="A/O=1-250"/>
</dbReference>
<dbReference type="PDB" id="5L68">
    <property type="method" value="X-ray"/>
    <property type="resolution" value="2.80 A"/>
    <property type="chains" value="A/O=1-250"/>
</dbReference>
<dbReference type="PDB" id="5L69">
    <property type="method" value="X-ray"/>
    <property type="resolution" value="2.70 A"/>
    <property type="chains" value="A/O=1-250"/>
</dbReference>
<dbReference type="PDB" id="5L6A">
    <property type="method" value="X-ray"/>
    <property type="resolution" value="2.80 A"/>
    <property type="chains" value="A/O=1-250"/>
</dbReference>
<dbReference type="PDB" id="5L6B">
    <property type="method" value="X-ray"/>
    <property type="resolution" value="2.60 A"/>
    <property type="chains" value="A/O=1-250"/>
</dbReference>
<dbReference type="PDB" id="5L6C">
    <property type="method" value="X-ray"/>
    <property type="resolution" value="2.60 A"/>
    <property type="chains" value="A/O=1-250"/>
</dbReference>
<dbReference type="PDB" id="5LAI">
    <property type="method" value="X-ray"/>
    <property type="resolution" value="2.50 A"/>
    <property type="chains" value="A/O=1-250"/>
</dbReference>
<dbReference type="PDB" id="5LAJ">
    <property type="method" value="X-ray"/>
    <property type="resolution" value="2.90 A"/>
    <property type="chains" value="A/O=1-250"/>
</dbReference>
<dbReference type="PDB" id="5LTT">
    <property type="method" value="X-ray"/>
    <property type="resolution" value="2.70 A"/>
    <property type="chains" value="A/O=1-250"/>
</dbReference>
<dbReference type="PDB" id="5M2B">
    <property type="method" value="X-ray"/>
    <property type="resolution" value="2.70 A"/>
    <property type="chains" value="A/O=1-250"/>
</dbReference>
<dbReference type="PDB" id="5MP9">
    <property type="method" value="EM"/>
    <property type="resolution" value="4.10 A"/>
    <property type="chains" value="B/b=1-250"/>
</dbReference>
<dbReference type="PDB" id="5MPA">
    <property type="method" value="EM"/>
    <property type="resolution" value="4.50 A"/>
    <property type="chains" value="B/b=1-250"/>
</dbReference>
<dbReference type="PDB" id="5MPB">
    <property type="method" value="EM"/>
    <property type="resolution" value="7.80 A"/>
    <property type="chains" value="B/b=1-250"/>
</dbReference>
<dbReference type="PDB" id="5MPC">
    <property type="method" value="EM"/>
    <property type="resolution" value="7.70 A"/>
    <property type="chains" value="B/b=1-250"/>
</dbReference>
<dbReference type="PDB" id="5NIF">
    <property type="method" value="X-ray"/>
    <property type="resolution" value="3.00 A"/>
    <property type="chains" value="B/P=1-250"/>
</dbReference>
<dbReference type="PDB" id="5WVI">
    <property type="method" value="EM"/>
    <property type="resolution" value="6.30 A"/>
    <property type="chains" value="B/j=1-250"/>
</dbReference>
<dbReference type="PDB" id="5WVK">
    <property type="method" value="EM"/>
    <property type="resolution" value="4.20 A"/>
    <property type="chains" value="B/j=1-250"/>
</dbReference>
<dbReference type="PDB" id="6EF0">
    <property type="method" value="EM"/>
    <property type="resolution" value="4.43 A"/>
    <property type="chains" value="B=1-250"/>
</dbReference>
<dbReference type="PDB" id="6EF1">
    <property type="method" value="EM"/>
    <property type="resolution" value="4.73 A"/>
    <property type="chains" value="B=1-250"/>
</dbReference>
<dbReference type="PDB" id="6EF2">
    <property type="method" value="EM"/>
    <property type="resolution" value="4.27 A"/>
    <property type="chains" value="B=1-249"/>
</dbReference>
<dbReference type="PDB" id="6EF3">
    <property type="method" value="EM"/>
    <property type="resolution" value="4.17 A"/>
    <property type="chains" value="B=1-250"/>
</dbReference>
<dbReference type="PDB" id="6FVT">
    <property type="method" value="EM"/>
    <property type="resolution" value="4.10 A"/>
    <property type="chains" value="B/b=2-250"/>
</dbReference>
<dbReference type="PDB" id="6FVU">
    <property type="method" value="EM"/>
    <property type="resolution" value="4.50 A"/>
    <property type="chains" value="B/b=2-250"/>
</dbReference>
<dbReference type="PDB" id="6FVV">
    <property type="method" value="EM"/>
    <property type="resolution" value="5.40 A"/>
    <property type="chains" value="B/b=2-250"/>
</dbReference>
<dbReference type="PDB" id="6FVW">
    <property type="method" value="EM"/>
    <property type="resolution" value="4.50 A"/>
    <property type="chains" value="B/b=4-250"/>
</dbReference>
<dbReference type="PDB" id="6FVX">
    <property type="method" value="EM"/>
    <property type="resolution" value="4.90 A"/>
    <property type="chains" value="B/b=5-250"/>
</dbReference>
<dbReference type="PDB" id="6FVY">
    <property type="method" value="EM"/>
    <property type="resolution" value="6.10 A"/>
    <property type="chains" value="B/b=3-250"/>
</dbReference>
<dbReference type="PDB" id="6G7F">
    <property type="method" value="X-ray"/>
    <property type="resolution" value="2.70 A"/>
    <property type="chains" value="A/O=1-250"/>
</dbReference>
<dbReference type="PDB" id="6G8M">
    <property type="method" value="X-ray"/>
    <property type="resolution" value="2.70 A"/>
    <property type="chains" value="A/O=1-250"/>
</dbReference>
<dbReference type="PDB" id="6G8N">
    <property type="method" value="X-ray"/>
    <property type="resolution" value="3.00 A"/>
    <property type="chains" value="A/O=1-250"/>
</dbReference>
<dbReference type="PDB" id="6GOP">
    <property type="method" value="X-ray"/>
    <property type="resolution" value="2.90 A"/>
    <property type="chains" value="A/O=1-250"/>
</dbReference>
<dbReference type="PDB" id="6H39">
    <property type="method" value="X-ray"/>
    <property type="resolution" value="2.50 A"/>
    <property type="chains" value="A/O=1-250"/>
</dbReference>
<dbReference type="PDB" id="6HTB">
    <property type="method" value="X-ray"/>
    <property type="resolution" value="2.70 A"/>
    <property type="chains" value="A/O=1-250"/>
</dbReference>
<dbReference type="PDB" id="6HTC">
    <property type="method" value="X-ray"/>
    <property type="resolution" value="2.80 A"/>
    <property type="chains" value="A/O=1-250"/>
</dbReference>
<dbReference type="PDB" id="6HTD">
    <property type="method" value="X-ray"/>
    <property type="resolution" value="3.00 A"/>
    <property type="chains" value="A/O=1-250"/>
</dbReference>
<dbReference type="PDB" id="6HTP">
    <property type="method" value="X-ray"/>
    <property type="resolution" value="3.00 A"/>
    <property type="chains" value="A/O=1-250"/>
</dbReference>
<dbReference type="PDB" id="6HTR">
    <property type="method" value="X-ray"/>
    <property type="resolution" value="2.60 A"/>
    <property type="chains" value="A/O=1-250"/>
</dbReference>
<dbReference type="PDB" id="6HUB">
    <property type="method" value="X-ray"/>
    <property type="resolution" value="2.90 A"/>
    <property type="chains" value="A/O=1-250"/>
</dbReference>
<dbReference type="PDB" id="6HUC">
    <property type="method" value="X-ray"/>
    <property type="resolution" value="3.00 A"/>
    <property type="chains" value="A/O=1-250"/>
</dbReference>
<dbReference type="PDB" id="6HUQ">
    <property type="method" value="X-ray"/>
    <property type="resolution" value="3.00 A"/>
    <property type="chains" value="A/O=1-250"/>
</dbReference>
<dbReference type="PDB" id="6HUU">
    <property type="method" value="X-ray"/>
    <property type="resolution" value="2.80 A"/>
    <property type="chains" value="A/O=1-250"/>
</dbReference>
<dbReference type="PDB" id="6HUV">
    <property type="method" value="X-ray"/>
    <property type="resolution" value="3.10 A"/>
    <property type="chains" value="A/O=1-250"/>
</dbReference>
<dbReference type="PDB" id="6HV3">
    <property type="method" value="X-ray"/>
    <property type="resolution" value="2.70 A"/>
    <property type="chains" value="A/O=1-250"/>
</dbReference>
<dbReference type="PDB" id="6HV4">
    <property type="method" value="X-ray"/>
    <property type="resolution" value="3.00 A"/>
    <property type="chains" value="A/O=1-250"/>
</dbReference>
<dbReference type="PDB" id="6HV5">
    <property type="method" value="X-ray"/>
    <property type="resolution" value="3.00 A"/>
    <property type="chains" value="A/O=1-250"/>
</dbReference>
<dbReference type="PDB" id="6HV7">
    <property type="method" value="X-ray"/>
    <property type="resolution" value="3.40 A"/>
    <property type="chains" value="A/O=1-250"/>
</dbReference>
<dbReference type="PDB" id="6HVA">
    <property type="method" value="X-ray"/>
    <property type="resolution" value="2.90 A"/>
    <property type="chains" value="A/O=1-250"/>
</dbReference>
<dbReference type="PDB" id="6HVR">
    <property type="method" value="X-ray"/>
    <property type="resolution" value="2.70 A"/>
    <property type="chains" value="A/O=1-250"/>
</dbReference>
<dbReference type="PDB" id="6HVS">
    <property type="method" value="X-ray"/>
    <property type="resolution" value="3.10 A"/>
    <property type="chains" value="A/O=1-250"/>
</dbReference>
<dbReference type="PDB" id="6HVT">
    <property type="method" value="X-ray"/>
    <property type="resolution" value="2.90 A"/>
    <property type="chains" value="A/O=1-250"/>
</dbReference>
<dbReference type="PDB" id="6HVU">
    <property type="method" value="X-ray"/>
    <property type="resolution" value="2.90 A"/>
    <property type="chains" value="A/O=1-250"/>
</dbReference>
<dbReference type="PDB" id="6HVV">
    <property type="method" value="X-ray"/>
    <property type="resolution" value="2.70 A"/>
    <property type="chains" value="A/O=1-250"/>
</dbReference>
<dbReference type="PDB" id="6HVW">
    <property type="method" value="X-ray"/>
    <property type="resolution" value="3.00 A"/>
    <property type="chains" value="A/O=1-250"/>
</dbReference>
<dbReference type="PDB" id="6HVX">
    <property type="method" value="X-ray"/>
    <property type="resolution" value="2.80 A"/>
    <property type="chains" value="A/O=1-250"/>
</dbReference>
<dbReference type="PDB" id="6HVY">
    <property type="method" value="X-ray"/>
    <property type="resolution" value="2.70 A"/>
    <property type="chains" value="A/O=1-250"/>
</dbReference>
<dbReference type="PDB" id="6HW0">
    <property type="method" value="X-ray"/>
    <property type="resolution" value="2.80 A"/>
    <property type="chains" value="A/O=1-250"/>
</dbReference>
<dbReference type="PDB" id="6HW3">
    <property type="method" value="X-ray"/>
    <property type="resolution" value="2.60 A"/>
    <property type="chains" value="A/O=1-250"/>
</dbReference>
<dbReference type="PDB" id="6HW4">
    <property type="method" value="X-ray"/>
    <property type="resolution" value="2.90 A"/>
    <property type="chains" value="A/O=1-250"/>
</dbReference>
<dbReference type="PDB" id="6HW5">
    <property type="method" value="X-ray"/>
    <property type="resolution" value="2.90 A"/>
    <property type="chains" value="A/O=1-250"/>
</dbReference>
<dbReference type="PDB" id="6HW6">
    <property type="method" value="X-ray"/>
    <property type="resolution" value="2.70 A"/>
    <property type="chains" value="A/O=1-250"/>
</dbReference>
<dbReference type="PDB" id="6HW7">
    <property type="method" value="X-ray"/>
    <property type="resolution" value="2.70 A"/>
    <property type="chains" value="A/O=1-250"/>
</dbReference>
<dbReference type="PDB" id="6HW8">
    <property type="method" value="X-ray"/>
    <property type="resolution" value="2.80 A"/>
    <property type="chains" value="A/O=1-250"/>
</dbReference>
<dbReference type="PDB" id="6HW9">
    <property type="method" value="X-ray"/>
    <property type="resolution" value="2.80 A"/>
    <property type="chains" value="A/O=1-250"/>
</dbReference>
<dbReference type="PDB" id="6HWA">
    <property type="method" value="X-ray"/>
    <property type="resolution" value="2.80 A"/>
    <property type="chains" value="A/O=1-250"/>
</dbReference>
<dbReference type="PDB" id="6HWB">
    <property type="method" value="X-ray"/>
    <property type="resolution" value="2.60 A"/>
    <property type="chains" value="A/O=1-250"/>
</dbReference>
<dbReference type="PDB" id="6HWC">
    <property type="method" value="X-ray"/>
    <property type="resolution" value="2.80 A"/>
    <property type="chains" value="A/O=1-250"/>
</dbReference>
<dbReference type="PDB" id="6HWD">
    <property type="method" value="X-ray"/>
    <property type="resolution" value="2.80 A"/>
    <property type="chains" value="A/O=1-250"/>
</dbReference>
<dbReference type="PDB" id="6HWE">
    <property type="method" value="X-ray"/>
    <property type="resolution" value="2.30 A"/>
    <property type="chains" value="A/O=1-250"/>
</dbReference>
<dbReference type="PDB" id="6HWF">
    <property type="method" value="X-ray"/>
    <property type="resolution" value="2.50 A"/>
    <property type="chains" value="A/O=1-250"/>
</dbReference>
<dbReference type="PDB" id="6J2C">
    <property type="method" value="EM"/>
    <property type="resolution" value="7.00 A"/>
    <property type="chains" value="B/j=1-250"/>
</dbReference>
<dbReference type="PDB" id="6J2N">
    <property type="method" value="EM"/>
    <property type="resolution" value="7.50 A"/>
    <property type="chains" value="B/j=1-250"/>
</dbReference>
<dbReference type="PDB" id="6J2Q">
    <property type="method" value="EM"/>
    <property type="resolution" value="3.80 A"/>
    <property type="chains" value="B/j=1-250"/>
</dbReference>
<dbReference type="PDB" id="6J2X">
    <property type="method" value="EM"/>
    <property type="resolution" value="3.80 A"/>
    <property type="chains" value="B/j=1-250"/>
</dbReference>
<dbReference type="PDB" id="6J30">
    <property type="method" value="EM"/>
    <property type="resolution" value="4.50 A"/>
    <property type="chains" value="B/j=1-250"/>
</dbReference>
<dbReference type="PDB" id="6ZOU">
    <property type="method" value="X-ray"/>
    <property type="resolution" value="2.90 A"/>
    <property type="chains" value="A/O=1-250"/>
</dbReference>
<dbReference type="PDB" id="6ZP6">
    <property type="method" value="X-ray"/>
    <property type="resolution" value="2.80 A"/>
    <property type="chains" value="A/O=1-250"/>
</dbReference>
<dbReference type="PDB" id="6ZP8">
    <property type="method" value="X-ray"/>
    <property type="resolution" value="3.00 A"/>
    <property type="chains" value="A/O=1-250"/>
</dbReference>
<dbReference type="PDB" id="7LS5">
    <property type="method" value="EM"/>
    <property type="resolution" value="2.74 A"/>
    <property type="chains" value="B/P=1-250"/>
</dbReference>
<dbReference type="PDB" id="7LS6">
    <property type="method" value="EM"/>
    <property type="resolution" value="3.17 A"/>
    <property type="chains" value="B=1-250"/>
</dbReference>
<dbReference type="PDB" id="7LSX">
    <property type="method" value="EM"/>
    <property type="resolution" value="3.61 A"/>
    <property type="chains" value="B=1-250"/>
</dbReference>
<dbReference type="PDB" id="7O2L">
    <property type="method" value="X-ray"/>
    <property type="resolution" value="3.00 A"/>
    <property type="chains" value="A/O=1-250"/>
</dbReference>
<dbReference type="PDB" id="7QO3">
    <property type="method" value="EM"/>
    <property type="resolution" value="6.10 A"/>
    <property type="chains" value="B/b=1-250"/>
</dbReference>
<dbReference type="PDB" id="7QO5">
    <property type="method" value="EM"/>
    <property type="resolution" value="6.00 A"/>
    <property type="chains" value="B/b=1-250"/>
</dbReference>
<dbReference type="PDB" id="7TEJ">
    <property type="method" value="EM"/>
    <property type="resolution" value="2.74 A"/>
    <property type="chains" value="B/P=1-250"/>
</dbReference>
<dbReference type="PDB" id="7TEO">
    <property type="method" value="EM"/>
    <property type="resolution" value="2.97 A"/>
    <property type="chains" value="B/P=1-250"/>
</dbReference>
<dbReference type="PDB" id="8BW1">
    <property type="method" value="X-ray"/>
    <property type="resolution" value="3.25 A"/>
    <property type="chains" value="A/O=1-250"/>
</dbReference>
<dbReference type="PDB" id="8OHZ">
    <property type="method" value="X-ray"/>
    <property type="resolution" value="2.65 A"/>
    <property type="chains" value="A/O=1-250"/>
</dbReference>
<dbReference type="PDB" id="8OI1">
    <property type="method" value="X-ray"/>
    <property type="resolution" value="2.95 A"/>
    <property type="chains" value="A/O=1-250"/>
</dbReference>
<dbReference type="PDB" id="8OLR">
    <property type="method" value="X-ray"/>
    <property type="resolution" value="2.80 A"/>
    <property type="chains" value="A/O=1-250"/>
</dbReference>
<dbReference type="PDB" id="8RHJ">
    <property type="method" value="X-ray"/>
    <property type="resolution" value="3.05 A"/>
    <property type="chains" value="A/O=1-250"/>
</dbReference>
<dbReference type="PDB" id="8RHK">
    <property type="method" value="X-ray"/>
    <property type="resolution" value="2.80 A"/>
    <property type="chains" value="A/O=1-250"/>
</dbReference>
<dbReference type="PDB" id="8RHL">
    <property type="method" value="X-ray"/>
    <property type="resolution" value="3.20 A"/>
    <property type="chains" value="A/O=1-250"/>
</dbReference>
<dbReference type="PDB" id="8RVL">
    <property type="method" value="EM"/>
    <property type="resolution" value="2.14 A"/>
    <property type="chains" value="B/P=1-250"/>
</dbReference>
<dbReference type="PDB" id="8RVO">
    <property type="method" value="EM"/>
    <property type="resolution" value="2.69 A"/>
    <property type="chains" value="B/P=1-250"/>
</dbReference>
<dbReference type="PDB" id="8RVP">
    <property type="method" value="EM"/>
    <property type="resolution" value="2.28 A"/>
    <property type="chains" value="B/P=1-250"/>
</dbReference>
<dbReference type="PDB" id="8RVQ">
    <property type="method" value="EM"/>
    <property type="resolution" value="2.02 A"/>
    <property type="chains" value="B/P=1-250"/>
</dbReference>
<dbReference type="PDB" id="8T08">
    <property type="method" value="EM"/>
    <property type="resolution" value="3.00 A"/>
    <property type="chains" value="B/S=1-250"/>
</dbReference>
<dbReference type="PDB" id="8T0M">
    <property type="method" value="EM"/>
    <property type="resolution" value="2.40 A"/>
    <property type="chains" value="B/P=1-250"/>
</dbReference>
<dbReference type="PDB" id="8U6Y">
    <property type="method" value="EM"/>
    <property type="resolution" value="2.80 A"/>
    <property type="chains" value="B/S=1-250"/>
</dbReference>
<dbReference type="PDB" id="8U7U">
    <property type="method" value="EM"/>
    <property type="resolution" value="2.16 A"/>
    <property type="chains" value="B/P=1-250"/>
</dbReference>
<dbReference type="PDB" id="9D0T">
    <property type="method" value="EM"/>
    <property type="resolution" value="2.84 A"/>
    <property type="chains" value="B=1-250"/>
</dbReference>
<dbReference type="PDB" id="9EY9">
    <property type="method" value="X-ray"/>
    <property type="resolution" value="3.10 A"/>
    <property type="chains" value="A/O=1-250"/>
</dbReference>
<dbReference type="PDB" id="9FST">
    <property type="method" value="X-ray"/>
    <property type="resolution" value="2.75 A"/>
    <property type="chains" value="A/O=1-250"/>
</dbReference>
<dbReference type="PDB" id="9FSV">
    <property type="method" value="X-ray"/>
    <property type="resolution" value="2.75 A"/>
    <property type="chains" value="A/O=1-250"/>
</dbReference>
<dbReference type="PDB" id="9FT0">
    <property type="method" value="X-ray"/>
    <property type="resolution" value="2.75 A"/>
    <property type="chains" value="A/O=1-250"/>
</dbReference>
<dbReference type="PDB" id="9FT1">
    <property type="method" value="X-ray"/>
    <property type="resolution" value="2.60 A"/>
    <property type="chains" value="A/O=1-250"/>
</dbReference>
<dbReference type="PDB" id="9GBK">
    <property type="method" value="EM"/>
    <property type="resolution" value="2.39 A"/>
    <property type="chains" value="B/P=1-250"/>
</dbReference>
<dbReference type="PDBsum" id="1FNT"/>
<dbReference type="PDBsum" id="1G0U"/>
<dbReference type="PDBsum" id="1G65"/>
<dbReference type="PDBsum" id="1JD2"/>
<dbReference type="PDBsum" id="1RYP"/>
<dbReference type="PDBsum" id="1Z7Q"/>
<dbReference type="PDBsum" id="2F16"/>
<dbReference type="PDBsum" id="2FAK"/>
<dbReference type="PDBsum" id="2GPL"/>
<dbReference type="PDBsum" id="2ZCY"/>
<dbReference type="PDBsum" id="3BDM"/>
<dbReference type="PDBsum" id="3D29"/>
<dbReference type="PDBsum" id="3DY3"/>
<dbReference type="PDBsum" id="3DY4"/>
<dbReference type="PDBsum" id="3E47"/>
<dbReference type="PDBsum" id="3GPJ"/>
<dbReference type="PDBsum" id="3GPT"/>
<dbReference type="PDBsum" id="3GPW"/>
<dbReference type="PDBsum" id="3HYE"/>
<dbReference type="PDBsum" id="3JCO"/>
<dbReference type="PDBsum" id="3JCP"/>
<dbReference type="PDBsum" id="3MG0"/>
<dbReference type="PDBsum" id="3MG4"/>
<dbReference type="PDBsum" id="3MG6"/>
<dbReference type="PDBsum" id="3MG7"/>
<dbReference type="PDBsum" id="3MG8"/>
<dbReference type="PDBsum" id="3NZJ"/>
<dbReference type="PDBsum" id="3NZW"/>
<dbReference type="PDBsum" id="3NZX"/>
<dbReference type="PDBsum" id="3OEU"/>
<dbReference type="PDBsum" id="3OEV"/>
<dbReference type="PDBsum" id="3OKJ"/>
<dbReference type="PDBsum" id="3SDI"/>
<dbReference type="PDBsum" id="3SDK"/>
<dbReference type="PDBsum" id="3SHJ"/>
<dbReference type="PDBsum" id="3TDD"/>
<dbReference type="PDBsum" id="3UN4"/>
<dbReference type="PDBsum" id="3UN8"/>
<dbReference type="PDBsum" id="3WXR"/>
<dbReference type="PDBsum" id="4CR2"/>
<dbReference type="PDBsum" id="4CR3"/>
<dbReference type="PDBsum" id="4CR4"/>
<dbReference type="PDBsum" id="4EU2"/>
<dbReference type="PDBsum" id="4FZC"/>
<dbReference type="PDBsum" id="4FZG"/>
<dbReference type="PDBsum" id="4G4S"/>
<dbReference type="PDBsum" id="4GK7"/>
<dbReference type="PDBsum" id="4HNP"/>
<dbReference type="PDBsum" id="4HRC"/>
<dbReference type="PDBsum" id="4HRD"/>
<dbReference type="PDBsum" id="4INR"/>
<dbReference type="PDBsum" id="4INT"/>
<dbReference type="PDBsum" id="4INU"/>
<dbReference type="PDBsum" id="4J70"/>
<dbReference type="PDBsum" id="4JSQ"/>
<dbReference type="PDBsum" id="4JSU"/>
<dbReference type="PDBsum" id="4JT0"/>
<dbReference type="PDBsum" id="4LQI"/>
<dbReference type="PDBsum" id="4LTC"/>
<dbReference type="PDBsum" id="4NNN"/>
<dbReference type="PDBsum" id="4NNW"/>
<dbReference type="PDBsum" id="4NO1"/>
<dbReference type="PDBsum" id="4NO6"/>
<dbReference type="PDBsum" id="4NO8"/>
<dbReference type="PDBsum" id="4NO9"/>
<dbReference type="PDBsum" id="4Q1S"/>
<dbReference type="PDBsum" id="4QBY"/>
<dbReference type="PDBsum" id="4QLQ"/>
<dbReference type="PDBsum" id="4QLS"/>
<dbReference type="PDBsum" id="4QLT"/>
<dbReference type="PDBsum" id="4QLU"/>
<dbReference type="PDBsum" id="4QLV"/>
<dbReference type="PDBsum" id="4QUX"/>
<dbReference type="PDBsum" id="4QUY"/>
<dbReference type="PDBsum" id="4QV0"/>
<dbReference type="PDBsum" id="4QV1"/>
<dbReference type="PDBsum" id="4QV3"/>
<dbReference type="PDBsum" id="4QV4"/>
<dbReference type="PDBsum" id="4QV5"/>
<dbReference type="PDBsum" id="4QV6"/>
<dbReference type="PDBsum" id="4QV7"/>
<dbReference type="PDBsum" id="4QV8"/>
<dbReference type="PDBsum" id="4QV9"/>
<dbReference type="PDBsum" id="4QVL"/>
<dbReference type="PDBsum" id="4QVM"/>
<dbReference type="PDBsum" id="4QVN"/>
<dbReference type="PDBsum" id="4QVP"/>
<dbReference type="PDBsum" id="4QVQ"/>
<dbReference type="PDBsum" id="4QVV"/>
<dbReference type="PDBsum" id="4QVW"/>
<dbReference type="PDBsum" id="4QVY"/>
<dbReference type="PDBsum" id="4QW0"/>
<dbReference type="PDBsum" id="4QW1"/>
<dbReference type="PDBsum" id="4QW3"/>
<dbReference type="PDBsum" id="4QW4"/>
<dbReference type="PDBsum" id="4QW5"/>
<dbReference type="PDBsum" id="4QW6"/>
<dbReference type="PDBsum" id="4QW7"/>
<dbReference type="PDBsum" id="4QWF"/>
<dbReference type="PDBsum" id="4QWG"/>
<dbReference type="PDBsum" id="4QWI"/>
<dbReference type="PDBsum" id="4QWJ"/>
<dbReference type="PDBsum" id="4QWK"/>
<dbReference type="PDBsum" id="4QWL"/>
<dbReference type="PDBsum" id="4QWR"/>
<dbReference type="PDBsum" id="4QWS"/>
<dbReference type="PDBsum" id="4QWU"/>
<dbReference type="PDBsum" id="4QWX"/>
<dbReference type="PDBsum" id="4QXJ"/>
<dbReference type="PDBsum" id="4QZ0"/>
<dbReference type="PDBsum" id="4QZ1"/>
<dbReference type="PDBsum" id="4QZ2"/>
<dbReference type="PDBsum" id="4QZ3"/>
<dbReference type="PDBsum" id="4QZ4"/>
<dbReference type="PDBsum" id="4QZ5"/>
<dbReference type="PDBsum" id="4QZ6"/>
<dbReference type="PDBsum" id="4QZ7"/>
<dbReference type="PDBsum" id="4QZW"/>
<dbReference type="PDBsum" id="4QZX"/>
<dbReference type="PDBsum" id="4QZZ"/>
<dbReference type="PDBsum" id="4R00"/>
<dbReference type="PDBsum" id="4R02"/>
<dbReference type="PDBsum" id="4R17"/>
<dbReference type="PDBsum" id="4R18"/>
<dbReference type="PDBsum" id="4RUR"/>
<dbReference type="PDBsum" id="4V7O"/>
<dbReference type="PDBsum" id="4X6Z"/>
<dbReference type="PDBsum" id="4Y69"/>
<dbReference type="PDBsum" id="4Y6A"/>
<dbReference type="PDBsum" id="4Y6V"/>
<dbReference type="PDBsum" id="4Y6Z"/>
<dbReference type="PDBsum" id="4Y70"/>
<dbReference type="PDBsum" id="4Y74"/>
<dbReference type="PDBsum" id="4Y75"/>
<dbReference type="PDBsum" id="4Y77"/>
<dbReference type="PDBsum" id="4Y78"/>
<dbReference type="PDBsum" id="4Y7W"/>
<dbReference type="PDBsum" id="4Y7X"/>
<dbReference type="PDBsum" id="4Y7Y"/>
<dbReference type="PDBsum" id="4Y80"/>
<dbReference type="PDBsum" id="4Y81"/>
<dbReference type="PDBsum" id="4Y82"/>
<dbReference type="PDBsum" id="4Y84"/>
<dbReference type="PDBsum" id="4Y8G"/>
<dbReference type="PDBsum" id="4Y8H"/>
<dbReference type="PDBsum" id="4Y8I"/>
<dbReference type="PDBsum" id="4Y8J"/>
<dbReference type="PDBsum" id="4Y8K"/>
<dbReference type="PDBsum" id="4Y8L"/>
<dbReference type="PDBsum" id="4Y8M"/>
<dbReference type="PDBsum" id="4Y8N"/>
<dbReference type="PDBsum" id="4Y8O"/>
<dbReference type="PDBsum" id="4Y8P"/>
<dbReference type="PDBsum" id="4Y8Q"/>
<dbReference type="PDBsum" id="4Y8R"/>
<dbReference type="PDBsum" id="4Y8S"/>
<dbReference type="PDBsum" id="4Y8T"/>
<dbReference type="PDBsum" id="4Y8U"/>
<dbReference type="PDBsum" id="4Y9Y"/>
<dbReference type="PDBsum" id="4Y9Z"/>
<dbReference type="PDBsum" id="4YA0"/>
<dbReference type="PDBsum" id="4YA1"/>
<dbReference type="PDBsum" id="4YA2"/>
<dbReference type="PDBsum" id="4YA3"/>
<dbReference type="PDBsum" id="4YA4"/>
<dbReference type="PDBsum" id="4YA5"/>
<dbReference type="PDBsum" id="4YA7"/>
<dbReference type="PDBsum" id="4YA9"/>
<dbReference type="PDBsum" id="4Z1L"/>
<dbReference type="PDBsum" id="5A5B"/>
<dbReference type="PDBsum" id="5AHJ"/>
<dbReference type="PDBsum" id="5BOU"/>
<dbReference type="PDBsum" id="5BXL"/>
<dbReference type="PDBsum" id="5BXN"/>
<dbReference type="PDBsum" id="5CGF"/>
<dbReference type="PDBsum" id="5CGG"/>
<dbReference type="PDBsum" id="5CGH"/>
<dbReference type="PDBsum" id="5CGI"/>
<dbReference type="PDBsum" id="5CZ4"/>
<dbReference type="PDBsum" id="5CZ5"/>
<dbReference type="PDBsum" id="5CZ6"/>
<dbReference type="PDBsum" id="5CZ7"/>
<dbReference type="PDBsum" id="5CZ8"/>
<dbReference type="PDBsum" id="5CZ9"/>
<dbReference type="PDBsum" id="5CZA"/>
<dbReference type="PDBsum" id="5D0S"/>
<dbReference type="PDBsum" id="5D0T"/>
<dbReference type="PDBsum" id="5D0V"/>
<dbReference type="PDBsum" id="5D0W"/>
<dbReference type="PDBsum" id="5D0X"/>
<dbReference type="PDBsum" id="5D0Z"/>
<dbReference type="PDBsum" id="5DKI"/>
<dbReference type="PDBsum" id="5DKJ"/>
<dbReference type="PDBsum" id="5FG7"/>
<dbReference type="PDBsum" id="5FG9"/>
<dbReference type="PDBsum" id="5FGA"/>
<dbReference type="PDBsum" id="5FGD"/>
<dbReference type="PDBsum" id="5FGE"/>
<dbReference type="PDBsum" id="5FGF"/>
<dbReference type="PDBsum" id="5FGG"/>
<dbReference type="PDBsum" id="5FGH"/>
<dbReference type="PDBsum" id="5FGI"/>
<dbReference type="PDBsum" id="5FHS"/>
<dbReference type="PDBsum" id="5JHR"/>
<dbReference type="PDBsum" id="5JHS"/>
<dbReference type="PDBsum" id="5L52"/>
<dbReference type="PDBsum" id="5L54"/>
<dbReference type="PDBsum" id="5L55"/>
<dbReference type="PDBsum" id="5L5A"/>
<dbReference type="PDBsum" id="5L5B"/>
<dbReference type="PDBsum" id="5L5D"/>
<dbReference type="PDBsum" id="5L5E"/>
<dbReference type="PDBsum" id="5L5F"/>
<dbReference type="PDBsum" id="5L5H"/>
<dbReference type="PDBsum" id="5L5I"/>
<dbReference type="PDBsum" id="5L5J"/>
<dbReference type="PDBsum" id="5L5O"/>
<dbReference type="PDBsum" id="5L5P"/>
<dbReference type="PDBsum" id="5L5Q"/>
<dbReference type="PDBsum" id="5L5R"/>
<dbReference type="PDBsum" id="5L5S"/>
<dbReference type="PDBsum" id="5L5T"/>
<dbReference type="PDBsum" id="5L5U"/>
<dbReference type="PDBsum" id="5L5V"/>
<dbReference type="PDBsum" id="5L5W"/>
<dbReference type="PDBsum" id="5L5X"/>
<dbReference type="PDBsum" id="5L5Y"/>
<dbReference type="PDBsum" id="5L5Z"/>
<dbReference type="PDBsum" id="5L60"/>
<dbReference type="PDBsum" id="5L61"/>
<dbReference type="PDBsum" id="5L62"/>
<dbReference type="PDBsum" id="5L63"/>
<dbReference type="PDBsum" id="5L64"/>
<dbReference type="PDBsum" id="5L65"/>
<dbReference type="PDBsum" id="5L66"/>
<dbReference type="PDBsum" id="5L67"/>
<dbReference type="PDBsum" id="5L68"/>
<dbReference type="PDBsum" id="5L69"/>
<dbReference type="PDBsum" id="5L6A"/>
<dbReference type="PDBsum" id="5L6B"/>
<dbReference type="PDBsum" id="5L6C"/>
<dbReference type="PDBsum" id="5LAI"/>
<dbReference type="PDBsum" id="5LAJ"/>
<dbReference type="PDBsum" id="5LTT"/>
<dbReference type="PDBsum" id="5M2B"/>
<dbReference type="PDBsum" id="5MP9"/>
<dbReference type="PDBsum" id="5MPA"/>
<dbReference type="PDBsum" id="5MPB"/>
<dbReference type="PDBsum" id="5MPC"/>
<dbReference type="PDBsum" id="5NIF"/>
<dbReference type="PDBsum" id="5WVI"/>
<dbReference type="PDBsum" id="5WVK"/>
<dbReference type="PDBsum" id="6EF0"/>
<dbReference type="PDBsum" id="6EF1"/>
<dbReference type="PDBsum" id="6EF2"/>
<dbReference type="PDBsum" id="6EF3"/>
<dbReference type="PDBsum" id="6FVT"/>
<dbReference type="PDBsum" id="6FVU"/>
<dbReference type="PDBsum" id="6FVV"/>
<dbReference type="PDBsum" id="6FVW"/>
<dbReference type="PDBsum" id="6FVX"/>
<dbReference type="PDBsum" id="6FVY"/>
<dbReference type="PDBsum" id="6G7F"/>
<dbReference type="PDBsum" id="6G8M"/>
<dbReference type="PDBsum" id="6G8N"/>
<dbReference type="PDBsum" id="6GOP"/>
<dbReference type="PDBsum" id="6H39"/>
<dbReference type="PDBsum" id="6HTB"/>
<dbReference type="PDBsum" id="6HTC"/>
<dbReference type="PDBsum" id="6HTD"/>
<dbReference type="PDBsum" id="6HTP"/>
<dbReference type="PDBsum" id="6HTR"/>
<dbReference type="PDBsum" id="6HUB"/>
<dbReference type="PDBsum" id="6HUC"/>
<dbReference type="PDBsum" id="6HUQ"/>
<dbReference type="PDBsum" id="6HUU"/>
<dbReference type="PDBsum" id="6HUV"/>
<dbReference type="PDBsum" id="6HV3"/>
<dbReference type="PDBsum" id="6HV4"/>
<dbReference type="PDBsum" id="6HV5"/>
<dbReference type="PDBsum" id="6HV7"/>
<dbReference type="PDBsum" id="6HVA"/>
<dbReference type="PDBsum" id="6HVR"/>
<dbReference type="PDBsum" id="6HVS"/>
<dbReference type="PDBsum" id="6HVT"/>
<dbReference type="PDBsum" id="6HVU"/>
<dbReference type="PDBsum" id="6HVV"/>
<dbReference type="PDBsum" id="6HVW"/>
<dbReference type="PDBsum" id="6HVX"/>
<dbReference type="PDBsum" id="6HVY"/>
<dbReference type="PDBsum" id="6HW0"/>
<dbReference type="PDBsum" id="6HW3"/>
<dbReference type="PDBsum" id="6HW4"/>
<dbReference type="PDBsum" id="6HW5"/>
<dbReference type="PDBsum" id="6HW6"/>
<dbReference type="PDBsum" id="6HW7"/>
<dbReference type="PDBsum" id="6HW8"/>
<dbReference type="PDBsum" id="6HW9"/>
<dbReference type="PDBsum" id="6HWA"/>
<dbReference type="PDBsum" id="6HWB"/>
<dbReference type="PDBsum" id="6HWC"/>
<dbReference type="PDBsum" id="6HWD"/>
<dbReference type="PDBsum" id="6HWE"/>
<dbReference type="PDBsum" id="6HWF"/>
<dbReference type="PDBsum" id="6J2C"/>
<dbReference type="PDBsum" id="6J2N"/>
<dbReference type="PDBsum" id="6J2Q"/>
<dbReference type="PDBsum" id="6J2X"/>
<dbReference type="PDBsum" id="6J30"/>
<dbReference type="PDBsum" id="6ZOU"/>
<dbReference type="PDBsum" id="6ZP6"/>
<dbReference type="PDBsum" id="6ZP8"/>
<dbReference type="PDBsum" id="7LS5"/>
<dbReference type="PDBsum" id="7LS6"/>
<dbReference type="PDBsum" id="7LSX"/>
<dbReference type="PDBsum" id="7O2L"/>
<dbReference type="PDBsum" id="7QO3"/>
<dbReference type="PDBsum" id="7QO5"/>
<dbReference type="PDBsum" id="7TEJ"/>
<dbReference type="PDBsum" id="7TEO"/>
<dbReference type="PDBsum" id="8BW1"/>
<dbReference type="PDBsum" id="8OHZ"/>
<dbReference type="PDBsum" id="8OI1"/>
<dbReference type="PDBsum" id="8OLR"/>
<dbReference type="PDBsum" id="8RHJ"/>
<dbReference type="PDBsum" id="8RHK"/>
<dbReference type="PDBsum" id="8RHL"/>
<dbReference type="PDBsum" id="8RVL"/>
<dbReference type="PDBsum" id="8RVO"/>
<dbReference type="PDBsum" id="8RVP"/>
<dbReference type="PDBsum" id="8RVQ"/>
<dbReference type="PDBsum" id="8T08"/>
<dbReference type="PDBsum" id="8T0M"/>
<dbReference type="PDBsum" id="8U6Y"/>
<dbReference type="PDBsum" id="8U7U"/>
<dbReference type="PDBsum" id="9D0T"/>
<dbReference type="PDBsum" id="9EY9"/>
<dbReference type="PDBsum" id="9FST"/>
<dbReference type="PDBsum" id="9FSV"/>
<dbReference type="PDBsum" id="9FT0"/>
<dbReference type="PDBsum" id="9FT1"/>
<dbReference type="PDBsum" id="9GBK"/>
<dbReference type="EMDB" id="EMD-14082"/>
<dbReference type="EMDB" id="EMD-14084"/>
<dbReference type="EMDB" id="EMD-19523"/>
<dbReference type="EMDB" id="EMD-19527"/>
<dbReference type="EMDB" id="EMD-19528"/>
<dbReference type="EMDB" id="EMD-19529"/>
<dbReference type="EMDB" id="EMD-23502"/>
<dbReference type="EMDB" id="EMD-23503"/>
<dbReference type="EMDB" id="EMD-23508"/>
<dbReference type="EMDB" id="EMD-25847"/>
<dbReference type="EMDB" id="EMD-25848"/>
<dbReference type="EMDB" id="EMD-3534"/>
<dbReference type="EMDB" id="EMD-3535"/>
<dbReference type="EMDB" id="EMD-3536"/>
<dbReference type="EMDB" id="EMD-3537"/>
<dbReference type="EMDB" id="EMD-40938"/>
<dbReference type="EMDB" id="EMD-40944"/>
<dbReference type="EMDB" id="EMD-41963"/>
<dbReference type="EMDB" id="EMD-41993"/>
<dbReference type="EMDB" id="EMD-4321"/>
<dbReference type="EMDB" id="EMD-4322"/>
<dbReference type="EMDB" id="EMD-4323"/>
<dbReference type="EMDB" id="EMD-4324"/>
<dbReference type="EMDB" id="EMD-46461"/>
<dbReference type="EMDB" id="EMD-51221"/>
<dbReference type="EMDB" id="EMD-6693"/>
<dbReference type="EMDB" id="EMD-6694"/>
<dbReference type="EMDB" id="EMD-9042"/>
<dbReference type="EMDB" id="EMD-9043"/>
<dbReference type="EMDB" id="EMD-9044"/>
<dbReference type="EMDB" id="EMD-9045"/>
<dbReference type="EMDB" id="EMD-9769"/>
<dbReference type="EMDB" id="EMD-9770"/>
<dbReference type="EMDB" id="EMD-9771"/>
<dbReference type="EMDB" id="EMD-9772"/>
<dbReference type="EMDB" id="EMD-9773"/>
<dbReference type="SMR" id="P23639"/>
<dbReference type="BioGRID" id="35051">
    <property type="interactions" value="281"/>
</dbReference>
<dbReference type="ComplexPortal" id="CPX-2262">
    <property type="entry name" value="26S proteasome complex"/>
</dbReference>
<dbReference type="DIP" id="DIP-2822N"/>
<dbReference type="FunCoup" id="P23639">
    <property type="interactions" value="1275"/>
</dbReference>
<dbReference type="IntAct" id="P23639">
    <property type="interactions" value="57"/>
</dbReference>
<dbReference type="MINT" id="P23639"/>
<dbReference type="STRING" id="4932.YML092C"/>
<dbReference type="BindingDB" id="P23639"/>
<dbReference type="iPTMnet" id="P23639"/>
<dbReference type="PaxDb" id="4932-YML092C"/>
<dbReference type="PeptideAtlas" id="P23639"/>
<dbReference type="EnsemblFungi" id="YML092C_mRNA">
    <property type="protein sequence ID" value="YML092C"/>
    <property type="gene ID" value="YML092C"/>
</dbReference>
<dbReference type="GeneID" id="854882"/>
<dbReference type="KEGG" id="sce:YML092C"/>
<dbReference type="AGR" id="SGD:S000004557"/>
<dbReference type="SGD" id="S000004557">
    <property type="gene designation" value="PRE8"/>
</dbReference>
<dbReference type="VEuPathDB" id="FungiDB:YML092C"/>
<dbReference type="eggNOG" id="KOG0181">
    <property type="taxonomic scope" value="Eukaryota"/>
</dbReference>
<dbReference type="GeneTree" id="ENSGT00550000074870"/>
<dbReference type="HOGENOM" id="CLU_035750_4_1_1"/>
<dbReference type="InParanoid" id="P23639"/>
<dbReference type="OMA" id="ATCIGKD"/>
<dbReference type="OrthoDB" id="431557at2759"/>
<dbReference type="BioCyc" id="YEAST:G3O-32677-MONOMER"/>
<dbReference type="Reactome" id="R-SCE-1236978">
    <property type="pathway name" value="Cross-presentation of soluble exogenous antigens (endosomes)"/>
</dbReference>
<dbReference type="Reactome" id="R-SCE-5668541">
    <property type="pathway name" value="TNFR2 non-canonical NF-kB pathway"/>
</dbReference>
<dbReference type="Reactome" id="R-SCE-5687128">
    <property type="pathway name" value="MAPK6/MAPK4 signaling"/>
</dbReference>
<dbReference type="Reactome" id="R-SCE-5689880">
    <property type="pathway name" value="Ub-specific processing proteases"/>
</dbReference>
<dbReference type="Reactome" id="R-SCE-6798695">
    <property type="pathway name" value="Neutrophil degranulation"/>
</dbReference>
<dbReference type="Reactome" id="R-SCE-68949">
    <property type="pathway name" value="Orc1 removal from chromatin"/>
</dbReference>
<dbReference type="Reactome" id="R-SCE-69017">
    <property type="pathway name" value="CDK-mediated phosphorylation and removal of Cdc6"/>
</dbReference>
<dbReference type="Reactome" id="R-SCE-69601">
    <property type="pathway name" value="Ubiquitin Mediated Degradation of Phosphorylated Cdc25A"/>
</dbReference>
<dbReference type="Reactome" id="R-SCE-8854050">
    <property type="pathway name" value="FBXL7 down-regulates AURKA during mitotic entry and in early mitosis"/>
</dbReference>
<dbReference type="Reactome" id="R-SCE-8948751">
    <property type="pathway name" value="Regulation of PTEN stability and activity"/>
</dbReference>
<dbReference type="Reactome" id="R-SCE-8951664">
    <property type="pathway name" value="Neddylation"/>
</dbReference>
<dbReference type="Reactome" id="R-SCE-9755511">
    <property type="pathway name" value="KEAP1-NFE2L2 pathway"/>
</dbReference>
<dbReference type="Reactome" id="R-SCE-983168">
    <property type="pathway name" value="Antigen processing: Ubiquitination &amp; Proteasome degradation"/>
</dbReference>
<dbReference type="Reactome" id="R-SCE-9907900">
    <property type="pathway name" value="Proteasome assembly"/>
</dbReference>
<dbReference type="BioGRID-ORCS" id="854882">
    <property type="hits" value="8 hits in 10 CRISPR screens"/>
</dbReference>
<dbReference type="EvolutionaryTrace" id="P23639"/>
<dbReference type="PRO" id="PR:P23639"/>
<dbReference type="Proteomes" id="UP000002311">
    <property type="component" value="Chromosome XIII"/>
</dbReference>
<dbReference type="RNAct" id="P23639">
    <property type="molecule type" value="protein"/>
</dbReference>
<dbReference type="GO" id="GO:0005634">
    <property type="term" value="C:nucleus"/>
    <property type="evidence" value="ECO:0007669"/>
    <property type="project" value="UniProtKB-SubCell"/>
</dbReference>
<dbReference type="GO" id="GO:0000502">
    <property type="term" value="C:proteasome complex"/>
    <property type="evidence" value="ECO:0000353"/>
    <property type="project" value="ComplexPortal"/>
</dbReference>
<dbReference type="GO" id="GO:0019773">
    <property type="term" value="C:proteasome core complex, alpha-subunit complex"/>
    <property type="evidence" value="ECO:0000314"/>
    <property type="project" value="SGD"/>
</dbReference>
<dbReference type="GO" id="GO:0034515">
    <property type="term" value="C:proteasome storage granule"/>
    <property type="evidence" value="ECO:0000314"/>
    <property type="project" value="SGD"/>
</dbReference>
<dbReference type="GO" id="GO:0010499">
    <property type="term" value="P:proteasomal ubiquitin-independent protein catabolic process"/>
    <property type="evidence" value="ECO:0000314"/>
    <property type="project" value="SGD"/>
</dbReference>
<dbReference type="GO" id="GO:0043161">
    <property type="term" value="P:proteasome-mediated ubiquitin-dependent protein catabolic process"/>
    <property type="evidence" value="ECO:0000314"/>
    <property type="project" value="SGD"/>
</dbReference>
<dbReference type="CDD" id="cd03750">
    <property type="entry name" value="proteasome_alpha_type_2"/>
    <property type="match status" value="1"/>
</dbReference>
<dbReference type="FunFam" id="3.60.20.10:FF:000048">
    <property type="entry name" value="Proteasome subunit alpha type-2"/>
    <property type="match status" value="1"/>
</dbReference>
<dbReference type="Gene3D" id="3.60.20.10">
    <property type="entry name" value="Glutamine Phosphoribosylpyrophosphate, subunit 1, domain 1"/>
    <property type="match status" value="1"/>
</dbReference>
<dbReference type="InterPro" id="IPR029055">
    <property type="entry name" value="Ntn_hydrolases_N"/>
</dbReference>
<dbReference type="InterPro" id="IPR050115">
    <property type="entry name" value="Proteasome_alpha"/>
</dbReference>
<dbReference type="InterPro" id="IPR023332">
    <property type="entry name" value="Proteasome_alpha-type"/>
</dbReference>
<dbReference type="InterPro" id="IPR000426">
    <property type="entry name" value="Proteasome_asu_N"/>
</dbReference>
<dbReference type="InterPro" id="IPR001353">
    <property type="entry name" value="Proteasome_sua/b"/>
</dbReference>
<dbReference type="PANTHER" id="PTHR11599">
    <property type="entry name" value="PROTEASOME SUBUNIT ALPHA/BETA"/>
    <property type="match status" value="1"/>
</dbReference>
<dbReference type="Pfam" id="PF00227">
    <property type="entry name" value="Proteasome"/>
    <property type="match status" value="1"/>
</dbReference>
<dbReference type="Pfam" id="PF10584">
    <property type="entry name" value="Proteasome_A_N"/>
    <property type="match status" value="1"/>
</dbReference>
<dbReference type="SMART" id="SM00948">
    <property type="entry name" value="Proteasome_A_N"/>
    <property type="match status" value="1"/>
</dbReference>
<dbReference type="SUPFAM" id="SSF56235">
    <property type="entry name" value="N-terminal nucleophile aminohydrolases (Ntn hydrolases)"/>
    <property type="match status" value="1"/>
</dbReference>
<dbReference type="PROSITE" id="PS00388">
    <property type="entry name" value="PROTEASOME_ALPHA_1"/>
    <property type="match status" value="1"/>
</dbReference>
<dbReference type="PROSITE" id="PS51475">
    <property type="entry name" value="PROTEASOME_ALPHA_2"/>
    <property type="match status" value="1"/>
</dbReference>